<keyword id="KW-0002">3D-structure</keyword>
<keyword id="KW-0007">Acetylation</keyword>
<keyword id="KW-0025">Alternative splicing</keyword>
<keyword id="KW-0112">Calmodulin-binding</keyword>
<keyword id="KW-0963">Cytoplasm</keyword>
<keyword id="KW-0206">Cytoskeleton</keyword>
<keyword id="KW-0903">Direct protein sequencing</keyword>
<keyword id="KW-0225">Disease variant</keyword>
<keyword id="KW-0945">Host-virus interaction</keyword>
<keyword id="KW-0479">Metal-binding</keyword>
<keyword id="KW-0539">Nucleus</keyword>
<keyword id="KW-0597">Phosphoprotein</keyword>
<keyword id="KW-1267">Proteomics identification</keyword>
<keyword id="KW-1185">Reference proteome</keyword>
<keyword id="KW-0808">Transferase</keyword>
<keyword id="KW-0833">Ubl conjugation pathway</keyword>
<keyword id="KW-0862">Zinc</keyword>
<keyword id="KW-0863">Zinc-finger</keyword>
<reference key="1">
    <citation type="journal article" date="2005" name="Proc. Natl. Acad. Sci. U.S.A.">
        <title>p600, a unique protein required for membrane morphogenesis and cell survival.</title>
        <authorList>
            <person name="Nakatani Y."/>
            <person name="Konishi H."/>
            <person name="Vassilev A."/>
            <person name="Kurooka H."/>
            <person name="Ishiguro K."/>
            <person name="Sawada J."/>
            <person name="Ikura T."/>
            <person name="Korsmeyer S.J."/>
            <person name="Qin J."/>
            <person name="Herlitz A.M."/>
        </authorList>
    </citation>
    <scope>NUCLEOTIDE SEQUENCE [MRNA] (ISOFORM 1)</scope>
    <scope>INTERACTION WITH RB1 AND CALMODULIN</scope>
    <scope>IDENTIFICATION BY MASS SPECTROMETRY</scope>
    <scope>SUBCELLULAR LOCATION</scope>
    <scope>FUNCTION</scope>
</reference>
<reference key="2">
    <citation type="journal article" date="2004" name="Nat. Genet.">
        <title>Complete sequencing and characterization of 21,243 full-length human cDNAs.</title>
        <authorList>
            <person name="Ota T."/>
            <person name="Suzuki Y."/>
            <person name="Nishikawa T."/>
            <person name="Otsuki T."/>
            <person name="Sugiyama T."/>
            <person name="Irie R."/>
            <person name="Wakamatsu A."/>
            <person name="Hayashi K."/>
            <person name="Sato H."/>
            <person name="Nagai K."/>
            <person name="Kimura K."/>
            <person name="Makita H."/>
            <person name="Sekine M."/>
            <person name="Obayashi M."/>
            <person name="Nishi T."/>
            <person name="Shibahara T."/>
            <person name="Tanaka T."/>
            <person name="Ishii S."/>
            <person name="Yamamoto J."/>
            <person name="Saito K."/>
            <person name="Kawai Y."/>
            <person name="Isono Y."/>
            <person name="Nakamura Y."/>
            <person name="Nagahari K."/>
            <person name="Murakami K."/>
            <person name="Yasuda T."/>
            <person name="Iwayanagi T."/>
            <person name="Wagatsuma M."/>
            <person name="Shiratori A."/>
            <person name="Sudo H."/>
            <person name="Hosoiri T."/>
            <person name="Kaku Y."/>
            <person name="Kodaira H."/>
            <person name="Kondo H."/>
            <person name="Sugawara M."/>
            <person name="Takahashi M."/>
            <person name="Kanda K."/>
            <person name="Yokoi T."/>
            <person name="Furuya T."/>
            <person name="Kikkawa E."/>
            <person name="Omura Y."/>
            <person name="Abe K."/>
            <person name="Kamihara K."/>
            <person name="Katsuta N."/>
            <person name="Sato K."/>
            <person name="Tanikawa M."/>
            <person name="Yamazaki M."/>
            <person name="Ninomiya K."/>
            <person name="Ishibashi T."/>
            <person name="Yamashita H."/>
            <person name="Murakawa K."/>
            <person name="Fujimori K."/>
            <person name="Tanai H."/>
            <person name="Kimata M."/>
            <person name="Watanabe M."/>
            <person name="Hiraoka S."/>
            <person name="Chiba Y."/>
            <person name="Ishida S."/>
            <person name="Ono Y."/>
            <person name="Takiguchi S."/>
            <person name="Watanabe S."/>
            <person name="Yosida M."/>
            <person name="Hotuta T."/>
            <person name="Kusano J."/>
            <person name="Kanehori K."/>
            <person name="Takahashi-Fujii A."/>
            <person name="Hara H."/>
            <person name="Tanase T.-O."/>
            <person name="Nomura Y."/>
            <person name="Togiya S."/>
            <person name="Komai F."/>
            <person name="Hara R."/>
            <person name="Takeuchi K."/>
            <person name="Arita M."/>
            <person name="Imose N."/>
            <person name="Musashino K."/>
            <person name="Yuuki H."/>
            <person name="Oshima A."/>
            <person name="Sasaki N."/>
            <person name="Aotsuka S."/>
            <person name="Yoshikawa Y."/>
            <person name="Matsunawa H."/>
            <person name="Ichihara T."/>
            <person name="Shiohata N."/>
            <person name="Sano S."/>
            <person name="Moriya S."/>
            <person name="Momiyama H."/>
            <person name="Satoh N."/>
            <person name="Takami S."/>
            <person name="Terashima Y."/>
            <person name="Suzuki O."/>
            <person name="Nakagawa S."/>
            <person name="Senoh A."/>
            <person name="Mizoguchi H."/>
            <person name="Goto Y."/>
            <person name="Shimizu F."/>
            <person name="Wakebe H."/>
            <person name="Hishigaki H."/>
            <person name="Watanabe T."/>
            <person name="Sugiyama A."/>
            <person name="Takemoto M."/>
            <person name="Kawakami B."/>
            <person name="Yamazaki M."/>
            <person name="Watanabe K."/>
            <person name="Kumagai A."/>
            <person name="Itakura S."/>
            <person name="Fukuzumi Y."/>
            <person name="Fujimori Y."/>
            <person name="Komiyama M."/>
            <person name="Tashiro H."/>
            <person name="Tanigami A."/>
            <person name="Fujiwara T."/>
            <person name="Ono T."/>
            <person name="Yamada K."/>
            <person name="Fujii Y."/>
            <person name="Ozaki K."/>
            <person name="Hirao M."/>
            <person name="Ohmori Y."/>
            <person name="Kawabata A."/>
            <person name="Hikiji T."/>
            <person name="Kobatake N."/>
            <person name="Inagaki H."/>
            <person name="Ikema Y."/>
            <person name="Okamoto S."/>
            <person name="Okitani R."/>
            <person name="Kawakami T."/>
            <person name="Noguchi S."/>
            <person name="Itoh T."/>
            <person name="Shigeta K."/>
            <person name="Senba T."/>
            <person name="Matsumura K."/>
            <person name="Nakajima Y."/>
            <person name="Mizuno T."/>
            <person name="Morinaga M."/>
            <person name="Sasaki M."/>
            <person name="Togashi T."/>
            <person name="Oyama M."/>
            <person name="Hata H."/>
            <person name="Watanabe M."/>
            <person name="Komatsu T."/>
            <person name="Mizushima-Sugano J."/>
            <person name="Satoh T."/>
            <person name="Shirai Y."/>
            <person name="Takahashi Y."/>
            <person name="Nakagawa K."/>
            <person name="Okumura K."/>
            <person name="Nagase T."/>
            <person name="Nomura N."/>
            <person name="Kikuchi H."/>
            <person name="Masuho Y."/>
            <person name="Yamashita R."/>
            <person name="Nakai K."/>
            <person name="Yada T."/>
            <person name="Nakamura Y."/>
            <person name="Ohara O."/>
            <person name="Isogai T."/>
            <person name="Sugano S."/>
        </authorList>
    </citation>
    <scope>NUCLEOTIDE SEQUENCE [LARGE SCALE MRNA] (ISOFORM 6)</scope>
    <source>
        <tissue>Mammary gland</tissue>
    </source>
</reference>
<reference key="3">
    <citation type="journal article" date="2006" name="Nature">
        <title>The DNA sequence and biological annotation of human chromosome 1.</title>
        <authorList>
            <person name="Gregory S.G."/>
            <person name="Barlow K.F."/>
            <person name="McLay K.E."/>
            <person name="Kaul R."/>
            <person name="Swarbreck D."/>
            <person name="Dunham A."/>
            <person name="Scott C.E."/>
            <person name="Howe K.L."/>
            <person name="Woodfine K."/>
            <person name="Spencer C.C.A."/>
            <person name="Jones M.C."/>
            <person name="Gillson C."/>
            <person name="Searle S."/>
            <person name="Zhou Y."/>
            <person name="Kokocinski F."/>
            <person name="McDonald L."/>
            <person name="Evans R."/>
            <person name="Phillips K."/>
            <person name="Atkinson A."/>
            <person name="Cooper R."/>
            <person name="Jones C."/>
            <person name="Hall R.E."/>
            <person name="Andrews T.D."/>
            <person name="Lloyd C."/>
            <person name="Ainscough R."/>
            <person name="Almeida J.P."/>
            <person name="Ambrose K.D."/>
            <person name="Anderson F."/>
            <person name="Andrew R.W."/>
            <person name="Ashwell R.I.S."/>
            <person name="Aubin K."/>
            <person name="Babbage A.K."/>
            <person name="Bagguley C.L."/>
            <person name="Bailey J."/>
            <person name="Beasley H."/>
            <person name="Bethel G."/>
            <person name="Bird C.P."/>
            <person name="Bray-Allen S."/>
            <person name="Brown J.Y."/>
            <person name="Brown A.J."/>
            <person name="Buckley D."/>
            <person name="Burton J."/>
            <person name="Bye J."/>
            <person name="Carder C."/>
            <person name="Chapman J.C."/>
            <person name="Clark S.Y."/>
            <person name="Clarke G."/>
            <person name="Clee C."/>
            <person name="Cobley V."/>
            <person name="Collier R.E."/>
            <person name="Corby N."/>
            <person name="Coville G.J."/>
            <person name="Davies J."/>
            <person name="Deadman R."/>
            <person name="Dunn M."/>
            <person name="Earthrowl M."/>
            <person name="Ellington A.G."/>
            <person name="Errington H."/>
            <person name="Frankish A."/>
            <person name="Frankland J."/>
            <person name="French L."/>
            <person name="Garner P."/>
            <person name="Garnett J."/>
            <person name="Gay L."/>
            <person name="Ghori M.R.J."/>
            <person name="Gibson R."/>
            <person name="Gilby L.M."/>
            <person name="Gillett W."/>
            <person name="Glithero R.J."/>
            <person name="Grafham D.V."/>
            <person name="Griffiths C."/>
            <person name="Griffiths-Jones S."/>
            <person name="Grocock R."/>
            <person name="Hammond S."/>
            <person name="Harrison E.S.I."/>
            <person name="Hart E."/>
            <person name="Haugen E."/>
            <person name="Heath P.D."/>
            <person name="Holmes S."/>
            <person name="Holt K."/>
            <person name="Howden P.J."/>
            <person name="Hunt A.R."/>
            <person name="Hunt S.E."/>
            <person name="Hunter G."/>
            <person name="Isherwood J."/>
            <person name="James R."/>
            <person name="Johnson C."/>
            <person name="Johnson D."/>
            <person name="Joy A."/>
            <person name="Kay M."/>
            <person name="Kershaw J.K."/>
            <person name="Kibukawa M."/>
            <person name="Kimberley A.M."/>
            <person name="King A."/>
            <person name="Knights A.J."/>
            <person name="Lad H."/>
            <person name="Laird G."/>
            <person name="Lawlor S."/>
            <person name="Leongamornlert D.A."/>
            <person name="Lloyd D.M."/>
            <person name="Loveland J."/>
            <person name="Lovell J."/>
            <person name="Lush M.J."/>
            <person name="Lyne R."/>
            <person name="Martin S."/>
            <person name="Mashreghi-Mohammadi M."/>
            <person name="Matthews L."/>
            <person name="Matthews N.S.W."/>
            <person name="McLaren S."/>
            <person name="Milne S."/>
            <person name="Mistry S."/>
            <person name="Moore M.J.F."/>
            <person name="Nickerson T."/>
            <person name="O'Dell C.N."/>
            <person name="Oliver K."/>
            <person name="Palmeiri A."/>
            <person name="Palmer S.A."/>
            <person name="Parker A."/>
            <person name="Patel D."/>
            <person name="Pearce A.V."/>
            <person name="Peck A.I."/>
            <person name="Pelan S."/>
            <person name="Phelps K."/>
            <person name="Phillimore B.J."/>
            <person name="Plumb R."/>
            <person name="Rajan J."/>
            <person name="Raymond C."/>
            <person name="Rouse G."/>
            <person name="Saenphimmachak C."/>
            <person name="Sehra H.K."/>
            <person name="Sheridan E."/>
            <person name="Shownkeen R."/>
            <person name="Sims S."/>
            <person name="Skuce C.D."/>
            <person name="Smith M."/>
            <person name="Steward C."/>
            <person name="Subramanian S."/>
            <person name="Sycamore N."/>
            <person name="Tracey A."/>
            <person name="Tromans A."/>
            <person name="Van Helmond Z."/>
            <person name="Wall M."/>
            <person name="Wallis J.M."/>
            <person name="White S."/>
            <person name="Whitehead S.L."/>
            <person name="Wilkinson J.E."/>
            <person name="Willey D.L."/>
            <person name="Williams H."/>
            <person name="Wilming L."/>
            <person name="Wray P.W."/>
            <person name="Wu Z."/>
            <person name="Coulson A."/>
            <person name="Vaudin M."/>
            <person name="Sulston J.E."/>
            <person name="Durbin R.M."/>
            <person name="Hubbard T."/>
            <person name="Wooster R."/>
            <person name="Dunham I."/>
            <person name="Carter N.P."/>
            <person name="McVean G."/>
            <person name="Ross M.T."/>
            <person name="Harrow J."/>
            <person name="Olson M.V."/>
            <person name="Beck S."/>
            <person name="Rogers J."/>
            <person name="Bentley D.R."/>
        </authorList>
    </citation>
    <scope>NUCLEOTIDE SEQUENCE [LARGE SCALE GENOMIC DNA]</scope>
</reference>
<reference key="4">
    <citation type="submission" date="2007-07" db="UniProtKB">
        <authorList>
            <person name="Bienvenut W.V."/>
            <person name="Boldt K."/>
            <person name="von Kriegsheim A.F."/>
            <person name="Kolch W."/>
        </authorList>
    </citation>
    <scope>PROTEIN SEQUENCE OF 166-185; 435-443; 850-857; 921-931; 1065-1079; 1131-1141; 1175-1192; 1195-1208; 1286-1293; 1337-1349; 1434-1440; 1464-1470; 1478-1489; 1731-1757; 1838-1850; 1875-1886; 1909-1918; 1921-1931; 2048-2058; 2131-2138; 2211-2218; 2354-2381; 2527-2536; 2564-2572; 2713-2721; 2981-2989; 3046-3065; 3229-3238; 3243-3252; 3589-3606; 3618-3628; 3735-3745; 3809-3816; 3827-3836; 3845-3857; 3889-3915; 4131-4142; 4204-4215; 4320-4334; 4414-4426; 4608-4637; 4686-4696; 4717-4724; 4803-4814; 4852-4860; 5013-5022 AND 5062-5069</scope>
    <scope>PHOSPHORYLATION AT SER-2719</scope>
    <scope>IDENTIFICATION BY MASS SPECTROMETRY</scope>
    <source>
        <tissue>Hepatoma</tissue>
    </source>
</reference>
<reference key="5">
    <citation type="journal article" date="2000" name="DNA Res.">
        <title>Prediction of the coding sequences of unidentified human genes. XVI. The complete sequences of 150 new cDNA clones from brain which code for large proteins in vitro.</title>
        <authorList>
            <person name="Nagase T."/>
            <person name="Kikuno R."/>
            <person name="Ishikawa K."/>
            <person name="Hirosawa M."/>
            <person name="Ohara O."/>
        </authorList>
    </citation>
    <scope>NUCLEOTIDE SEQUENCE [LARGE SCALE MRNA] OF 779-5183 (ISOFORM 5)</scope>
    <source>
        <tissue>Brain</tissue>
    </source>
</reference>
<reference key="6">
    <citation type="journal article" date="1997" name="DNA Res.">
        <title>Characterization of cDNA clones in size-fractionated cDNA libraries from human brain.</title>
        <authorList>
            <person name="Seki N."/>
            <person name="Ohira M."/>
            <person name="Nagase T."/>
            <person name="Ishikawa K."/>
            <person name="Miyajima N."/>
            <person name="Nakajima D."/>
            <person name="Nomura N."/>
            <person name="Ohara O."/>
        </authorList>
    </citation>
    <scope>NUCLEOTIDE SEQUENCE [LARGE SCALE MRNA] OF 2908-5183 (ISOFORM 1)</scope>
    <source>
        <tissue>Brain</tissue>
    </source>
</reference>
<reference key="7">
    <citation type="journal article" date="2004" name="Genome Res.">
        <title>The status, quality, and expansion of the NIH full-length cDNA project: the Mammalian Gene Collection (MGC).</title>
        <authorList>
            <consortium name="The MGC Project Team"/>
        </authorList>
    </citation>
    <scope>NUCLEOTIDE SEQUENCE [LARGE SCALE MRNA] OF 4385-5183 (ISOFORMS 1 AND 2)</scope>
    <scope>VARIANT LEU-4867</scope>
    <source>
        <tissue>Kidney</tissue>
        <tissue>Liver</tissue>
        <tissue>Lung</tissue>
        <tissue>Spleen</tissue>
    </source>
</reference>
<reference key="8">
    <citation type="journal article" date="2005" name="Proc. Natl. Acad. Sci. U.S.A.">
        <title>The response of autologous T cells to a human melanoma is dominated by mutated neoantigens.</title>
        <authorList>
            <person name="Lennerz V."/>
            <person name="Fatho M."/>
            <person name="Gentilini C."/>
            <person name="Frye R.A."/>
            <person name="Lifke A."/>
            <person name="Ferel D."/>
            <person name="Woelfel C."/>
            <person name="Huber C."/>
            <person name="Woelfel T."/>
        </authorList>
    </citation>
    <scope>NUCLEOTIDE SEQUENCE [MRNA] OF 4583-5183 (ISOFORM 1)</scope>
    <scope>VARIANTS LEU-4867 AND ARG-4924</scope>
</reference>
<reference key="9">
    <citation type="journal article" date="2007" name="BMC Genomics">
        <title>The full-ORF clone resource of the German cDNA consortium.</title>
        <authorList>
            <person name="Bechtel S."/>
            <person name="Rosenfelder H."/>
            <person name="Duda A."/>
            <person name="Schmidt C.P."/>
            <person name="Ernst U."/>
            <person name="Wellenreuther R."/>
            <person name="Mehrle A."/>
            <person name="Schuster C."/>
            <person name="Bahr A."/>
            <person name="Bloecker H."/>
            <person name="Heubner D."/>
            <person name="Hoerlein A."/>
            <person name="Michel G."/>
            <person name="Wedler H."/>
            <person name="Koehrer K."/>
            <person name="Ottenwaelder B."/>
            <person name="Poustka A."/>
            <person name="Wiemann S."/>
            <person name="Schupp I."/>
        </authorList>
    </citation>
    <scope>NUCLEOTIDE SEQUENCE [LARGE SCALE MRNA] OF 4686-5183 (ISOFORM 1)</scope>
    <source>
        <tissue>Brain</tissue>
    </source>
</reference>
<reference key="10">
    <citation type="submission" date="1998-03" db="EMBL/GenBank/DDBJ databases">
        <authorList>
            <person name="Yu W."/>
            <person name="Gibbs R.A."/>
        </authorList>
    </citation>
    <scope>NUCLEOTIDE SEQUENCE [LARGE SCALE MRNA] OF 4709-5183 (ISOFORM 1)</scope>
    <scope>VARIANT LEU-4867</scope>
    <source>
        <tissue>Brain</tissue>
    </source>
</reference>
<reference key="11">
    <citation type="journal article" date="2005" name="Proc. Natl. Acad. Sci. U.S.A.">
        <title>Association of the human papillomavirus type 16 E7 oncoprotein with the 600-kDa retinoblastoma protein-associated factor, p600.</title>
        <authorList>
            <person name="Huh K.-W."/>
            <person name="DeMasi J."/>
            <person name="Ogawa H."/>
            <person name="Nakatani Y."/>
            <person name="Howley P.M."/>
            <person name="Muenger K."/>
        </authorList>
    </citation>
    <scope>INTERACTION WITH HPV-16 E7; HPV-6B E7 AND HPV-11 E7 (MICROBIAL INFECTION)</scope>
    <scope>IDENTIFICATION BY MASS SPECTROMETRY</scope>
    <scope>SUBCELLULAR LOCATION</scope>
</reference>
<reference key="12">
    <citation type="journal article" date="2008" name="Mol. Cell">
        <title>Kinase-selective enrichment enables quantitative phosphoproteomics of the kinome across the cell cycle.</title>
        <authorList>
            <person name="Daub H."/>
            <person name="Olsen J.V."/>
            <person name="Bairlein M."/>
            <person name="Gnad F."/>
            <person name="Oppermann F.S."/>
            <person name="Korner R."/>
            <person name="Greff Z."/>
            <person name="Keri G."/>
            <person name="Stemmann O."/>
            <person name="Mann M."/>
        </authorList>
    </citation>
    <scope>IDENTIFICATION BY MASS SPECTROMETRY [LARGE SCALE ANALYSIS]</scope>
    <source>
        <tissue>Cervix carcinoma</tissue>
    </source>
</reference>
<reference key="13">
    <citation type="journal article" date="2008" name="Proc. Natl. Acad. Sci. U.S.A.">
        <title>A quantitative atlas of mitotic phosphorylation.</title>
        <authorList>
            <person name="Dephoure N."/>
            <person name="Zhou C."/>
            <person name="Villen J."/>
            <person name="Beausoleil S.A."/>
            <person name="Bakalarski C.E."/>
            <person name="Elledge S.J."/>
            <person name="Gygi S.P."/>
        </authorList>
    </citation>
    <scope>PHOSPHORYLATION [LARGE SCALE ANALYSIS] AT SER-178; SER-181 AND THR-2715</scope>
    <scope>IDENTIFICATION BY MASS SPECTROMETRY [LARGE SCALE ANALYSIS]</scope>
    <source>
        <tissue>Cervix carcinoma</tissue>
    </source>
</reference>
<reference key="14">
    <citation type="journal article" date="2009" name="Anal. Chem.">
        <title>Lys-N and trypsin cover complementary parts of the phosphoproteome in a refined SCX-based approach.</title>
        <authorList>
            <person name="Gauci S."/>
            <person name="Helbig A.O."/>
            <person name="Slijper M."/>
            <person name="Krijgsveld J."/>
            <person name="Heck A.J."/>
            <person name="Mohammed S."/>
        </authorList>
    </citation>
    <scope>IDENTIFICATION BY MASS SPECTROMETRY [LARGE SCALE ANALYSIS]</scope>
</reference>
<reference key="15">
    <citation type="journal article" date="2009" name="Sci. Signal.">
        <title>Quantitative phosphoproteomic analysis of T cell receptor signaling reveals system-wide modulation of protein-protein interactions.</title>
        <authorList>
            <person name="Mayya V."/>
            <person name="Lundgren D.H."/>
            <person name="Hwang S.-I."/>
            <person name="Rezaul K."/>
            <person name="Wu L."/>
            <person name="Eng J.K."/>
            <person name="Rodionov V."/>
            <person name="Han D.K."/>
        </authorList>
    </citation>
    <scope>PHOSPHORYLATION [LARGE SCALE ANALYSIS] AT SER-181</scope>
    <scope>IDENTIFICATION BY MASS SPECTROMETRY [LARGE SCALE ANALYSIS]</scope>
    <source>
        <tissue>Leukemic T-cell</tissue>
    </source>
</reference>
<reference key="16">
    <citation type="journal article" date="2009" name="Science">
        <title>Lysine acetylation targets protein complexes and co-regulates major cellular functions.</title>
        <authorList>
            <person name="Choudhary C."/>
            <person name="Kumar C."/>
            <person name="Gnad F."/>
            <person name="Nielsen M.L."/>
            <person name="Rehman M."/>
            <person name="Walther T.C."/>
            <person name="Olsen J.V."/>
            <person name="Mann M."/>
        </authorList>
    </citation>
    <scope>ACETYLATION [LARGE SCALE ANALYSIS] AT LYS-1084</scope>
    <scope>IDENTIFICATION BY MASS SPECTROMETRY [LARGE SCALE ANALYSIS]</scope>
</reference>
<reference key="17">
    <citation type="journal article" date="2010" name="Sci. Signal.">
        <title>Quantitative phosphoproteomics reveals widespread full phosphorylation site occupancy during mitosis.</title>
        <authorList>
            <person name="Olsen J.V."/>
            <person name="Vermeulen M."/>
            <person name="Santamaria A."/>
            <person name="Kumar C."/>
            <person name="Miller M.L."/>
            <person name="Jensen L.J."/>
            <person name="Gnad F."/>
            <person name="Cox J."/>
            <person name="Jensen T.S."/>
            <person name="Nigg E.A."/>
            <person name="Brunak S."/>
            <person name="Mann M."/>
        </authorList>
    </citation>
    <scope>PHOSPHORYLATION [LARGE SCALE ANALYSIS] AT SER-178; SER-181 AND SER-1763</scope>
    <scope>IDENTIFICATION BY MASS SPECTROMETRY [LARGE SCALE ANALYSIS]</scope>
    <source>
        <tissue>Cervix carcinoma</tissue>
    </source>
</reference>
<reference key="18">
    <citation type="journal article" date="2011" name="BMC Syst. Biol.">
        <title>Initial characterization of the human central proteome.</title>
        <authorList>
            <person name="Burkard T.R."/>
            <person name="Planyavsky M."/>
            <person name="Kaupe I."/>
            <person name="Breitwieser F.P."/>
            <person name="Buerckstuemmer T."/>
            <person name="Bennett K.L."/>
            <person name="Superti-Furga G."/>
            <person name="Colinge J."/>
        </authorList>
    </citation>
    <scope>IDENTIFICATION BY MASS SPECTROMETRY [LARGE SCALE ANALYSIS]</scope>
</reference>
<reference key="19">
    <citation type="journal article" date="2011" name="Sci. Signal.">
        <title>System-wide temporal characterization of the proteome and phosphoproteome of human embryonic stem cell differentiation.</title>
        <authorList>
            <person name="Rigbolt K.T."/>
            <person name="Prokhorova T.A."/>
            <person name="Akimov V."/>
            <person name="Henningsen J."/>
            <person name="Johansen P.T."/>
            <person name="Kratchmarova I."/>
            <person name="Kassem M."/>
            <person name="Mann M."/>
            <person name="Olsen J.V."/>
            <person name="Blagoev B."/>
        </authorList>
    </citation>
    <scope>PHOSPHORYLATION [LARGE SCALE ANALYSIS] AT SER-2719</scope>
    <scope>IDENTIFICATION BY MASS SPECTROMETRY [LARGE SCALE ANALYSIS]</scope>
</reference>
<reference key="20">
    <citation type="journal article" date="2013" name="J. Proteome Res.">
        <title>Toward a comprehensive characterization of a human cancer cell phosphoproteome.</title>
        <authorList>
            <person name="Zhou H."/>
            <person name="Di Palma S."/>
            <person name="Preisinger C."/>
            <person name="Peng M."/>
            <person name="Polat A.N."/>
            <person name="Heck A.J."/>
            <person name="Mohammed S."/>
        </authorList>
    </citation>
    <scope>PHOSPHORYLATION [LARGE SCALE ANALYSIS] AT SER-178; SER-181; THR-905; SER-1747; SER-1878; SER-1904; THR-2715 AND SER-2719</scope>
    <scope>IDENTIFICATION BY MASS SPECTROMETRY [LARGE SCALE ANALYSIS]</scope>
    <source>
        <tissue>Cervix carcinoma</tissue>
        <tissue>Erythroleukemia</tissue>
    </source>
</reference>
<reference key="21">
    <citation type="journal article" date="2013" name="Mol. Cell">
        <title>Acetylation stabilizes ATP-citrate lyase to promote lipid biosynthesis and tumor growth.</title>
        <authorList>
            <person name="Lin R."/>
            <person name="Tao R."/>
            <person name="Gao X."/>
            <person name="Li T."/>
            <person name="Zhou X."/>
            <person name="Guan K.L."/>
            <person name="Xiong Y."/>
            <person name="Lei Q.Y."/>
        </authorList>
    </citation>
    <scope>FUNCTION</scope>
    <scope>CATALYTIC ACTIVITY</scope>
</reference>
<reference key="22">
    <citation type="journal article" date="2014" name="Eur. J. Hum. Genet.">
        <title>A novel locus for episodic ataxia:UBR4 the likely candidate.</title>
        <authorList>
            <person name="Conroy J."/>
            <person name="McGettigan P."/>
            <person name="Murphy R."/>
            <person name="Webb D."/>
            <person name="Murphy S.M."/>
            <person name="McCoy B."/>
            <person name="Albertyn C."/>
            <person name="McCreary D."/>
            <person name="McDonagh C."/>
            <person name="Walsh O."/>
            <person name="Lynch S."/>
            <person name="Ennis S."/>
        </authorList>
    </citation>
    <scope>VARIANT EA8 HIS-5091</scope>
</reference>
<reference key="23">
    <citation type="journal article" date="2014" name="J. Proteomics">
        <title>An enzyme assisted RP-RPLC approach for in-depth analysis of human liver phosphoproteome.</title>
        <authorList>
            <person name="Bian Y."/>
            <person name="Song C."/>
            <person name="Cheng K."/>
            <person name="Dong M."/>
            <person name="Wang F."/>
            <person name="Huang J."/>
            <person name="Sun D."/>
            <person name="Wang L."/>
            <person name="Ye M."/>
            <person name="Zou H."/>
        </authorList>
    </citation>
    <scope>PHOSPHORYLATION [LARGE SCALE ANALYSIS] AT SER-1647; SER-1652; THR-2944 AND SER-2952</scope>
    <scope>IDENTIFICATION BY MASS SPECTROMETRY [LARGE SCALE ANALYSIS]</scope>
    <source>
        <tissue>Liver</tissue>
    </source>
</reference>
<reference key="24">
    <citation type="journal article" date="2015" name="Mol. Cell. Proteomics">
        <title>KCMF1 (potassium channel modulatory factor 1) Links RAD6 to UBR4 (ubiquitin N-recognin domain-containing E3 ligase 4) and lysosome-mediated degradation.</title>
        <authorList>
            <person name="Hong J.H."/>
            <person name="Kaustov L."/>
            <person name="Coyaud E."/>
            <person name="Srikumar T."/>
            <person name="Wan J."/>
            <person name="Arrowsmith C."/>
            <person name="Raught B."/>
        </authorList>
    </citation>
    <scope>FUNCTION</scope>
    <scope>PATHWAY</scope>
    <scope>IDENTIFICATION IN THE SIFI COMPLEX</scope>
    <scope>INTERACTION WITH UBE2A</scope>
</reference>
<reference key="25">
    <citation type="journal article" date="2017" name="Cell">
        <title>Assembly and function of heterotypic ubiquitin chains in cell-cycle and protein quality control.</title>
        <authorList>
            <person name="Yau R.G."/>
            <person name="Doerner K."/>
            <person name="Castellanos E.R."/>
            <person name="Haakonsen D.L."/>
            <person name="Werner A."/>
            <person name="Wang N."/>
            <person name="Yang X.W."/>
            <person name="Martinez-Martin N."/>
            <person name="Matsumoto M.L."/>
            <person name="Dixit V.M."/>
            <person name="Rape M."/>
        </authorList>
    </citation>
    <scope>FUNCTION</scope>
    <scope>CATALYTIC ACTIVITY</scope>
    <scope>PATHWAY</scope>
    <scope>SUBCELLULAR LOCATION</scope>
</reference>
<reference key="26">
    <citation type="journal article" date="2021" name="Proc. Natl. Acad. Sci. U.S.A.">
        <title>The N-terminal cysteine is a dual sensor of oxygen and oxidative stress.</title>
        <authorList>
            <person name="Heo A.J."/>
            <person name="Kim S.B."/>
            <person name="Ji C.H."/>
            <person name="Han D."/>
            <person name="Lee S.J."/>
            <person name="Lee S.H."/>
            <person name="Lee M.J."/>
            <person name="Lee J.S."/>
            <person name="Ciechanover A."/>
            <person name="Kim B.Y."/>
            <person name="Kwon Y.T."/>
        </authorList>
    </citation>
    <scope>FUNCTION</scope>
    <scope>CATALYTIC ACTIVITY</scope>
    <scope>PATHWAY</scope>
</reference>
<reference key="27">
    <citation type="journal article" date="2022" name="Virology">
        <title>Rift Valley fever virus Gn V5-epitope tagged virus enables identification of UBR4 as a Gn interacting protein that facilitates Rift Valley fever virus production.</title>
        <authorList>
            <person name="Bracci N."/>
            <person name="de la Fuente C."/>
            <person name="Saleem S."/>
            <person name="Pinkham C."/>
            <person name="Narayanan A."/>
            <person name="Garcia-Sastre A."/>
            <person name="Balaraman V."/>
            <person name="Richt J.A."/>
            <person name="Wilson W."/>
            <person name="Kehn-Hall K."/>
        </authorList>
    </citation>
    <scope>INTERACTION WITH RIFT VALLEY FEVER VIRUS GLYCOPROTEIN N (MICROBIAL INFECTION)</scope>
</reference>
<reference key="28">
    <citation type="journal article" date="2023" name="Nat. Commun.">
        <title>N-terminal acetylation shields proteins from degradation and promotes age-dependent motility and longevity.</title>
        <authorList>
            <person name="Varland S."/>
            <person name="Silva R.D."/>
            <person name="Kjosaas I."/>
            <person name="Faustino A."/>
            <person name="Bogaert A."/>
            <person name="Billmann M."/>
            <person name="Boukhatmi H."/>
            <person name="Kellen B."/>
            <person name="Costanzo M."/>
            <person name="Drazic A."/>
            <person name="Osberg C."/>
            <person name="Chan K."/>
            <person name="Zhang X."/>
            <person name="Tong A.H.Y."/>
            <person name="Andreazza S."/>
            <person name="Lee J.J."/>
            <person name="Nedyalkova L."/>
            <person name="Usaj M."/>
            <person name="Whitworth A.J."/>
            <person name="Andrews B.J."/>
            <person name="Moffat J."/>
            <person name="Myers C.L."/>
            <person name="Gevaert K."/>
            <person name="Boone C."/>
            <person name="Martinho R.G."/>
            <person name="Arnesen T."/>
        </authorList>
    </citation>
    <scope>FUNCTION</scope>
    <scope>PATHWAY</scope>
</reference>
<reference key="29">
    <citation type="journal article" date="2024" name="Nature">
        <title>Stress response silencing by an E3 ligase mutated in neurodegeneration.</title>
        <authorList>
            <person name="Haakonsen D.L."/>
            <person name="Heider M."/>
            <person name="Ingersoll A.J."/>
            <person name="Vodehnal K."/>
            <person name="Witus S.R."/>
            <person name="Uenaka T."/>
            <person name="Wernig M."/>
            <person name="Rape M."/>
        </authorList>
    </citation>
    <scope>FUNCTION</scope>
    <scope>CATALYTIC ACTIVITY</scope>
    <scope>IDENTIFICATION IN THE SIFI COMPLEX</scope>
    <scope>SUBCELLULAR LOCATION</scope>
    <scope>PATHWAY</scope>
    <scope>INTERACTION WITH UBE2A</scope>
</reference>
<reference evidence="35 36" key="30">
    <citation type="journal article" date="2023" name="Commun. Biol.">
        <title>Insights into the recognition mechanism in the UBR box of UBR4 for its specific substrates.</title>
        <authorList>
            <person name="Jeong D.E."/>
            <person name="Lee H.S."/>
            <person name="Ku B."/>
            <person name="Kim C.H."/>
            <person name="Kim S.J."/>
            <person name="Shin H.C."/>
        </authorList>
    </citation>
    <scope>X-RAY CRYSTALLOGRAPHY (1.65 ANGSTROMS) OF 1660-1729 IN COMPLEX WITH ZINC</scope>
    <scope>FUNCTION</scope>
    <scope>CATALYTIC ACTIVITY</scope>
    <scope>DOMAIN</scope>
    <scope>MUTAGENESIS OF GLU-1670; PHE-1671; PHE-1712 AND PHE-1713</scope>
</reference>
<reference evidence="33 34" key="31">
    <citation type="journal article" date="2024" name="Nat. Struct. Mol. Biol.">
        <title>UBE2A and UBE2B are recruited by an atypical E3 ligase module in UBR4.</title>
        <authorList>
            <person name="Barnsby-Greer L."/>
            <person name="Mabbitt P.D."/>
            <person name="Dery M.A."/>
            <person name="Squair D.R."/>
            <person name="Wood N.T."/>
            <person name="Lamoliatte F."/>
            <person name="Lange S.M."/>
            <person name="Virdee S."/>
        </authorList>
    </citation>
    <scope>X-RAY CRYSTALLOGRAPHY (1.8 ANGSTROMS) OF 4730-5183 IN COMPLEX WITH ZINC AND UBE2A</scope>
    <scope>FUNCTION</scope>
    <scope>CATALYTIC ACTIVITY</scope>
    <scope>MUTAGENESIS OF CYS-4841; GLU-4843 AND CYS-4890</scope>
</reference>
<reference key="32">
    <citation type="journal article" date="2006" name="Science">
        <title>The consensus coding sequences of human breast and colorectal cancers.</title>
        <authorList>
            <person name="Sjoeblom T."/>
            <person name="Jones S."/>
            <person name="Wood L.D."/>
            <person name="Parsons D.W."/>
            <person name="Lin J."/>
            <person name="Barber T.D."/>
            <person name="Mandelker D."/>
            <person name="Leary R.J."/>
            <person name="Ptak J."/>
            <person name="Silliman N."/>
            <person name="Szabo S."/>
            <person name="Buckhaults P."/>
            <person name="Farrell C."/>
            <person name="Meeh P."/>
            <person name="Markowitz S.D."/>
            <person name="Willis J."/>
            <person name="Dawson D."/>
            <person name="Willson J.K.V."/>
            <person name="Gazdar A.F."/>
            <person name="Hartigan J."/>
            <person name="Wu L."/>
            <person name="Liu C."/>
            <person name="Parmigiani G."/>
            <person name="Park B.H."/>
            <person name="Bachman K.E."/>
            <person name="Papadopoulos N."/>
            <person name="Vogelstein B."/>
            <person name="Kinzler K.W."/>
            <person name="Velculescu V.E."/>
        </authorList>
    </citation>
    <scope>VARIANT [LARGE SCALE ANALYSIS] HIS-1394</scope>
</reference>
<name>UBR4_HUMAN</name>
<dbReference type="EC" id="2.3.2.27" evidence="11 14 15 20"/>
<dbReference type="EMBL" id="AF348492">
    <property type="protein sequence ID" value="AAL83880.1"/>
    <property type="molecule type" value="mRNA"/>
</dbReference>
<dbReference type="EMBL" id="AK022322">
    <property type="protein sequence ID" value="BAB14011.1"/>
    <property type="molecule type" value="mRNA"/>
</dbReference>
<dbReference type="EMBL" id="AL137127">
    <property type="status" value="NOT_ANNOTATED_CDS"/>
    <property type="molecule type" value="Genomic_DNA"/>
</dbReference>
<dbReference type="EMBL" id="AL357564">
    <property type="status" value="NOT_ANNOTATED_CDS"/>
    <property type="molecule type" value="Genomic_DNA"/>
</dbReference>
<dbReference type="EMBL" id="AB037728">
    <property type="protein sequence ID" value="BAA92545.1"/>
    <property type="molecule type" value="mRNA"/>
</dbReference>
<dbReference type="EMBL" id="AB007931">
    <property type="protein sequence ID" value="BAA32307.1"/>
    <property type="molecule type" value="mRNA"/>
</dbReference>
<dbReference type="EMBL" id="BC018694">
    <property type="protein sequence ID" value="AAH18694.2"/>
    <property type="molecule type" value="mRNA"/>
</dbReference>
<dbReference type="EMBL" id="BC063573">
    <property type="protein sequence ID" value="AAH63573.1"/>
    <property type="molecule type" value="mRNA"/>
</dbReference>
<dbReference type="EMBL" id="BC073905">
    <property type="protein sequence ID" value="AAH73905.1"/>
    <property type="molecule type" value="mRNA"/>
</dbReference>
<dbReference type="EMBL" id="BC096758">
    <property type="protein sequence ID" value="AAH96758.1"/>
    <property type="molecule type" value="mRNA"/>
</dbReference>
<dbReference type="EMBL" id="AJ505016">
    <property type="protein sequence ID" value="CAD43719.1"/>
    <property type="status" value="ALT_INIT"/>
    <property type="molecule type" value="mRNA"/>
</dbReference>
<dbReference type="EMBL" id="AL049972">
    <property type="protein sequence ID" value="CAB43227.1"/>
    <property type="molecule type" value="mRNA"/>
</dbReference>
<dbReference type="EMBL" id="AF055010">
    <property type="protein sequence ID" value="AAC09360.1"/>
    <property type="molecule type" value="mRNA"/>
</dbReference>
<dbReference type="CCDS" id="CCDS189.1">
    <molecule id="Q5T4S7-1"/>
</dbReference>
<dbReference type="PIR" id="T00076">
    <property type="entry name" value="T00076"/>
</dbReference>
<dbReference type="RefSeq" id="NP_065816.2">
    <molecule id="Q5T4S7-1"/>
    <property type="nucleotide sequence ID" value="NM_020765.3"/>
</dbReference>
<dbReference type="RefSeq" id="XP_047272475.1">
    <molecule id="Q5T4S7-4"/>
    <property type="nucleotide sequence ID" value="XM_047416519.1"/>
</dbReference>
<dbReference type="PDB" id="8B5W">
    <property type="method" value="X-ray"/>
    <property type="resolution" value="1.80 A"/>
    <property type="chains" value="A=4730-5183"/>
</dbReference>
<dbReference type="PDB" id="8BTL">
    <property type="method" value="X-ray"/>
    <property type="resolution" value="3.20 A"/>
    <property type="chains" value="A=4730-5183"/>
</dbReference>
<dbReference type="PDB" id="8J9Q">
    <property type="method" value="X-ray"/>
    <property type="resolution" value="2.18 A"/>
    <property type="chains" value="A/B/C=1660-1729"/>
</dbReference>
<dbReference type="PDB" id="8J9R">
    <property type="method" value="X-ray"/>
    <property type="resolution" value="1.65 A"/>
    <property type="chains" value="A=1660-1729"/>
</dbReference>
<dbReference type="PDBsum" id="8B5W"/>
<dbReference type="PDBsum" id="8BTL"/>
<dbReference type="PDBsum" id="8J9Q"/>
<dbReference type="PDBsum" id="8J9R"/>
<dbReference type="SMR" id="Q5T4S7"/>
<dbReference type="BioGRID" id="116934">
    <property type="interactions" value="340"/>
</dbReference>
<dbReference type="ComplexPortal" id="CPX-9141">
    <property type="entry name" value="Silencing factor of the integrated stress response complex"/>
</dbReference>
<dbReference type="CORUM" id="Q5T4S7"/>
<dbReference type="FunCoup" id="Q5T4S7">
    <property type="interactions" value="3874"/>
</dbReference>
<dbReference type="IntAct" id="Q5T4S7">
    <property type="interactions" value="173"/>
</dbReference>
<dbReference type="MINT" id="Q5T4S7"/>
<dbReference type="STRING" id="9606.ENSP00000364403"/>
<dbReference type="ChEMBL" id="CHEMBL4295851"/>
<dbReference type="DrugBank" id="DB05483">
    <property type="generic name" value="Picolinic acid"/>
</dbReference>
<dbReference type="DrugBank" id="DB04959">
    <property type="generic name" value="Verpasep caltespen"/>
</dbReference>
<dbReference type="CarbonylDB" id="Q5T4S7"/>
<dbReference type="GlyCosmos" id="Q5T4S7">
    <property type="glycosylation" value="2 sites, 2 glycans"/>
</dbReference>
<dbReference type="GlyGen" id="Q5T4S7">
    <property type="glycosylation" value="9 sites, 2 N-linked glycans (2 sites), 2 O-linked glycans (6 sites)"/>
</dbReference>
<dbReference type="iPTMnet" id="Q5T4S7"/>
<dbReference type="MetOSite" id="Q5T4S7"/>
<dbReference type="PhosphoSitePlus" id="Q5T4S7"/>
<dbReference type="SwissPalm" id="Q5T4S7"/>
<dbReference type="BioMuta" id="UBR4"/>
<dbReference type="DMDM" id="74744979"/>
<dbReference type="jPOST" id="Q5T4S7"/>
<dbReference type="MassIVE" id="Q5T4S7"/>
<dbReference type="PaxDb" id="9606-ENSP00000364403"/>
<dbReference type="PeptideAtlas" id="Q5T4S7"/>
<dbReference type="ProteomicsDB" id="64480">
    <molecule id="Q5T4S7-1"/>
</dbReference>
<dbReference type="ProteomicsDB" id="64481">
    <molecule id="Q5T4S7-2"/>
</dbReference>
<dbReference type="ProteomicsDB" id="64482">
    <molecule id="Q5T4S7-3"/>
</dbReference>
<dbReference type="ProteomicsDB" id="64483">
    <molecule id="Q5T4S7-4"/>
</dbReference>
<dbReference type="ProteomicsDB" id="64484">
    <molecule id="Q5T4S7-5"/>
</dbReference>
<dbReference type="ProteomicsDB" id="64485">
    <molecule id="Q5T4S7-6"/>
</dbReference>
<dbReference type="Pumba" id="Q5T4S7"/>
<dbReference type="Antibodypedia" id="2856">
    <property type="antibodies" value="129 antibodies from 27 providers"/>
</dbReference>
<dbReference type="DNASU" id="23352"/>
<dbReference type="Ensembl" id="ENST00000375218.3">
    <molecule id="Q5T4S7-6"/>
    <property type="protein sequence ID" value="ENSP00000364366.3"/>
    <property type="gene ID" value="ENSG00000127481.15"/>
</dbReference>
<dbReference type="Ensembl" id="ENST00000375254.8">
    <molecule id="Q5T4S7-1"/>
    <property type="protein sequence ID" value="ENSP00000364403.3"/>
    <property type="gene ID" value="ENSG00000127481.15"/>
</dbReference>
<dbReference type="GeneID" id="23352"/>
<dbReference type="KEGG" id="hsa:23352"/>
<dbReference type="MANE-Select" id="ENST00000375254.8">
    <property type="protein sequence ID" value="ENSP00000364403.3"/>
    <property type="RefSeq nucleotide sequence ID" value="NM_020765.3"/>
    <property type="RefSeq protein sequence ID" value="NP_065816.2"/>
</dbReference>
<dbReference type="UCSC" id="uc001bbi.4">
    <molecule id="Q5T4S7-1"/>
    <property type="organism name" value="human"/>
</dbReference>
<dbReference type="AGR" id="HGNC:30313"/>
<dbReference type="CTD" id="23352"/>
<dbReference type="DisGeNET" id="23352"/>
<dbReference type="GeneCards" id="UBR4"/>
<dbReference type="HGNC" id="HGNC:30313">
    <property type="gene designation" value="UBR4"/>
</dbReference>
<dbReference type="HPA" id="ENSG00000127481">
    <property type="expression patterns" value="Low tissue specificity"/>
</dbReference>
<dbReference type="MalaCards" id="UBR4"/>
<dbReference type="MIM" id="609890">
    <property type="type" value="gene"/>
</dbReference>
<dbReference type="MIM" id="616055">
    <property type="type" value="phenotype"/>
</dbReference>
<dbReference type="neXtProt" id="NX_Q5T4S7"/>
<dbReference type="OpenTargets" id="ENSG00000127481"/>
<dbReference type="PharmGKB" id="PA162407958"/>
<dbReference type="VEuPathDB" id="HostDB:ENSG00000127481"/>
<dbReference type="eggNOG" id="KOG1776">
    <property type="taxonomic scope" value="Eukaryota"/>
</dbReference>
<dbReference type="GeneTree" id="ENSGT00600000084471"/>
<dbReference type="HOGENOM" id="CLU_000069_0_0_1"/>
<dbReference type="InParanoid" id="Q5T4S7"/>
<dbReference type="OMA" id="VHRMEEH"/>
<dbReference type="OrthoDB" id="30336at2759"/>
<dbReference type="PAN-GO" id="Q5T4S7">
    <property type="GO annotations" value="5 GO annotations based on evolutionary models"/>
</dbReference>
<dbReference type="PhylomeDB" id="Q5T4S7"/>
<dbReference type="TreeFam" id="TF314406"/>
<dbReference type="PathwayCommons" id="Q5T4S7"/>
<dbReference type="Reactome" id="R-HSA-6798695">
    <property type="pathway name" value="Neutrophil degranulation"/>
</dbReference>
<dbReference type="Reactome" id="R-HSA-983168">
    <property type="pathway name" value="Antigen processing: Ubiquitination &amp; Proteasome degradation"/>
</dbReference>
<dbReference type="SignaLink" id="Q5T4S7"/>
<dbReference type="SIGNOR" id="Q5T4S7"/>
<dbReference type="UniPathway" id="UPA00143"/>
<dbReference type="BioGRID-ORCS" id="23352">
    <property type="hits" value="681 hits in 1220 CRISPR screens"/>
</dbReference>
<dbReference type="CD-CODE" id="FB4E32DD">
    <property type="entry name" value="Presynaptic clusters and postsynaptic densities"/>
</dbReference>
<dbReference type="ChiTaRS" id="UBR4">
    <property type="organism name" value="human"/>
</dbReference>
<dbReference type="GeneWiki" id="UBR4"/>
<dbReference type="GenomeRNAi" id="23352"/>
<dbReference type="Pharos" id="Q5T4S7">
    <property type="development level" value="Tbio"/>
</dbReference>
<dbReference type="PRO" id="PR:Q5T4S7"/>
<dbReference type="Proteomes" id="UP000005640">
    <property type="component" value="Chromosome 1"/>
</dbReference>
<dbReference type="RNAct" id="Q5T4S7">
    <property type="molecule type" value="protein"/>
</dbReference>
<dbReference type="Bgee" id="ENSG00000127481">
    <property type="expression patterns" value="Expressed in skin of leg and 103 other cell types or tissues"/>
</dbReference>
<dbReference type="ExpressionAtlas" id="Q5T4S7">
    <property type="expression patterns" value="baseline and differential"/>
</dbReference>
<dbReference type="GO" id="GO:0005813">
    <property type="term" value="C:centrosome"/>
    <property type="evidence" value="ECO:0000318"/>
    <property type="project" value="GO_Central"/>
</dbReference>
<dbReference type="GO" id="GO:0005737">
    <property type="term" value="C:cytoplasm"/>
    <property type="evidence" value="ECO:0000314"/>
    <property type="project" value="UniProtKB"/>
</dbReference>
<dbReference type="GO" id="GO:0005829">
    <property type="term" value="C:cytosol"/>
    <property type="evidence" value="ECO:0000318"/>
    <property type="project" value="GO_Central"/>
</dbReference>
<dbReference type="GO" id="GO:0005768">
    <property type="term" value="C:endosome"/>
    <property type="evidence" value="ECO:0000250"/>
    <property type="project" value="UniProtKB"/>
</dbReference>
<dbReference type="GO" id="GO:0101003">
    <property type="term" value="C:ficolin-1-rich granule membrane"/>
    <property type="evidence" value="ECO:0000304"/>
    <property type="project" value="Reactome"/>
</dbReference>
<dbReference type="GO" id="GO:0016020">
    <property type="term" value="C:membrane"/>
    <property type="evidence" value="ECO:0007005"/>
    <property type="project" value="UniProtKB"/>
</dbReference>
<dbReference type="GO" id="GO:0005654">
    <property type="term" value="C:nucleoplasm"/>
    <property type="evidence" value="ECO:0000318"/>
    <property type="project" value="GO_Central"/>
</dbReference>
<dbReference type="GO" id="GO:0005886">
    <property type="term" value="C:plasma membrane"/>
    <property type="evidence" value="ECO:0000304"/>
    <property type="project" value="Reactome"/>
</dbReference>
<dbReference type="GO" id="GO:0035579">
    <property type="term" value="C:specific granule membrane"/>
    <property type="evidence" value="ECO:0000304"/>
    <property type="project" value="Reactome"/>
</dbReference>
<dbReference type="GO" id="GO:0070821">
    <property type="term" value="C:tertiary granule membrane"/>
    <property type="evidence" value="ECO:0000304"/>
    <property type="project" value="Reactome"/>
</dbReference>
<dbReference type="GO" id="GO:0005516">
    <property type="term" value="F:calmodulin binding"/>
    <property type="evidence" value="ECO:0007669"/>
    <property type="project" value="UniProtKB-KW"/>
</dbReference>
<dbReference type="GO" id="GO:0061630">
    <property type="term" value="F:ubiquitin protein ligase activity"/>
    <property type="evidence" value="ECO:0000314"/>
    <property type="project" value="UniProtKB"/>
</dbReference>
<dbReference type="GO" id="GO:0004842">
    <property type="term" value="F:ubiquitin-protein transferase activity"/>
    <property type="evidence" value="ECO:0000318"/>
    <property type="project" value="GO_Central"/>
</dbReference>
<dbReference type="GO" id="GO:0008270">
    <property type="term" value="F:zinc ion binding"/>
    <property type="evidence" value="ECO:0007669"/>
    <property type="project" value="UniProtKB-KW"/>
</dbReference>
<dbReference type="GO" id="GO:0140455">
    <property type="term" value="P:cytoplasm protein quality control"/>
    <property type="evidence" value="ECO:0000314"/>
    <property type="project" value="UniProtKB"/>
</dbReference>
<dbReference type="GO" id="GO:0071629">
    <property type="term" value="P:cytoplasm protein quality control by the ubiquitin-proteasome system"/>
    <property type="evidence" value="ECO:0000314"/>
    <property type="project" value="UniProtKB"/>
</dbReference>
<dbReference type="GO" id="GO:0007032">
    <property type="term" value="P:endosome organization"/>
    <property type="evidence" value="ECO:0000250"/>
    <property type="project" value="UniProtKB"/>
</dbReference>
<dbReference type="GO" id="GO:0045717">
    <property type="term" value="P:negative regulation of fatty acid biosynthetic process"/>
    <property type="evidence" value="ECO:0000314"/>
    <property type="project" value="UniProt"/>
</dbReference>
<dbReference type="GO" id="GO:0141191">
    <property type="term" value="P:negative regulation of HRI-mediated signaling"/>
    <property type="evidence" value="ECO:0000314"/>
    <property type="project" value="UniProtKB"/>
</dbReference>
<dbReference type="GO" id="GO:0010508">
    <property type="term" value="P:positive regulation of autophagy"/>
    <property type="evidence" value="ECO:0000250"/>
    <property type="project" value="UniProtKB"/>
</dbReference>
<dbReference type="GO" id="GO:0043161">
    <property type="term" value="P:proteasome-mediated ubiquitin-dependent protein catabolic process"/>
    <property type="evidence" value="ECO:0000314"/>
    <property type="project" value="UniProtKB"/>
</dbReference>
<dbReference type="GO" id="GO:0141198">
    <property type="term" value="P:protein branched polyubiquitination"/>
    <property type="evidence" value="ECO:0000314"/>
    <property type="project" value="UniProtKB"/>
</dbReference>
<dbReference type="GO" id="GO:0070979">
    <property type="term" value="P:protein K11-linked ubiquitination"/>
    <property type="evidence" value="ECO:0000314"/>
    <property type="project" value="UniProtKB"/>
</dbReference>
<dbReference type="GO" id="GO:0044314">
    <property type="term" value="P:protein K27-linked ubiquitination"/>
    <property type="evidence" value="ECO:0000314"/>
    <property type="project" value="UniProtKB"/>
</dbReference>
<dbReference type="GO" id="GO:0070936">
    <property type="term" value="P:protein K48-linked ubiquitination"/>
    <property type="evidence" value="ECO:0000314"/>
    <property type="project" value="UniProtKB"/>
</dbReference>
<dbReference type="GO" id="GO:0050821">
    <property type="term" value="P:protein stabilization"/>
    <property type="evidence" value="ECO:0007669"/>
    <property type="project" value="Ensembl"/>
</dbReference>
<dbReference type="GO" id="GO:0006979">
    <property type="term" value="P:response to oxidative stress"/>
    <property type="evidence" value="ECO:0000314"/>
    <property type="project" value="UniProt"/>
</dbReference>
<dbReference type="GO" id="GO:0006511">
    <property type="term" value="P:ubiquitin-dependent protein catabolic process"/>
    <property type="evidence" value="ECO:0000314"/>
    <property type="project" value="UniProtKB"/>
</dbReference>
<dbReference type="GO" id="GO:0071596">
    <property type="term" value="P:ubiquitin-dependent protein catabolic process via the N-end rule pathway"/>
    <property type="evidence" value="ECO:0000314"/>
    <property type="project" value="UniProtKB"/>
</dbReference>
<dbReference type="CDD" id="cd19680">
    <property type="entry name" value="UBR-box_UBR4"/>
    <property type="match status" value="1"/>
</dbReference>
<dbReference type="InterPro" id="IPR016024">
    <property type="entry name" value="ARM-type_fold"/>
</dbReference>
<dbReference type="InterPro" id="IPR025704">
    <property type="entry name" value="E3_Ub_ligase_UBR4_C"/>
</dbReference>
<dbReference type="InterPro" id="IPR045841">
    <property type="entry name" value="E3_UBR4_N"/>
</dbReference>
<dbReference type="InterPro" id="IPR045189">
    <property type="entry name" value="UBR4-like"/>
</dbReference>
<dbReference type="InterPro" id="IPR056530">
    <property type="entry name" value="UBR4-like_dom"/>
</dbReference>
<dbReference type="InterPro" id="IPR047509">
    <property type="entry name" value="UBR4-like_UBR-box"/>
</dbReference>
<dbReference type="InterPro" id="IPR036322">
    <property type="entry name" value="WD40_repeat_dom_sf"/>
</dbReference>
<dbReference type="InterPro" id="IPR003126">
    <property type="entry name" value="Znf_UBR"/>
</dbReference>
<dbReference type="PANTHER" id="PTHR21725">
    <property type="entry name" value="E3 UBIQUITIN-PROTEIN LIGASE UBR4"/>
    <property type="match status" value="1"/>
</dbReference>
<dbReference type="PANTHER" id="PTHR21725:SF1">
    <property type="entry name" value="E3 UBIQUITIN-PROTEIN LIGASE UBR4"/>
    <property type="match status" value="1"/>
</dbReference>
<dbReference type="Pfam" id="PF13764">
    <property type="entry name" value="E3_UbLigase_R4"/>
    <property type="match status" value="1"/>
</dbReference>
<dbReference type="Pfam" id="PF19423">
    <property type="entry name" value="E3_UBR4_N"/>
    <property type="match status" value="1"/>
</dbReference>
<dbReference type="Pfam" id="PF24079">
    <property type="entry name" value="UBR4"/>
    <property type="match status" value="1"/>
</dbReference>
<dbReference type="Pfam" id="PF02207">
    <property type="entry name" value="zf-UBR"/>
    <property type="match status" value="1"/>
</dbReference>
<dbReference type="SMART" id="SM00396">
    <property type="entry name" value="ZnF_UBR1"/>
    <property type="match status" value="1"/>
</dbReference>
<dbReference type="SUPFAM" id="SSF48371">
    <property type="entry name" value="ARM repeat"/>
    <property type="match status" value="2"/>
</dbReference>
<dbReference type="SUPFAM" id="SSF50978">
    <property type="entry name" value="WD40 repeat-like"/>
    <property type="match status" value="1"/>
</dbReference>
<dbReference type="PROSITE" id="PS52043">
    <property type="entry name" value="UBR4_E3"/>
    <property type="match status" value="1"/>
</dbReference>
<dbReference type="PROSITE" id="PS51157">
    <property type="entry name" value="ZF_UBR"/>
    <property type="match status" value="1"/>
</dbReference>
<comment type="function">
    <text evidence="8 11 13 14 15 17 18 19 20">E3 ubiquitin-protein ligase involved in different protein quality control pathways in the cytoplasm (PubMed:25582440, PubMed:29033132, PubMed:34893540, PubMed:37891180, PubMed:38030679, PubMed:38182926, PubMed:38297121). Component of the N-end rule pathway: ubiquitinates proteins bearing specific N-terminal residues that are destabilizing according to the N-end rule, leading to their degradation (PubMed:34893540, PubMed:37891180, PubMed:38030679). Recognizes both type-1 and type-2 N-degrons, containing positively charged amino acids (Arg, Lys and His) and bulky and hydrophobic amino acids, respectively (PubMed:38030679). Does not ubiquitinate proteins that are acetylated at the N-terminus (PubMed:37891180). Together with UBR5, part of a cytoplasm protein quality control pathway that prevents protein aggregation by catalyzing assembly of heterotypic 'Lys-11'-/'Lys-48'-linked branched ubiquitin chains on aggregated proteins, leading to substrate recognition by the segregase p97/VCP and degradation by the proteasome: UBR4 probably synthesizes mixed chains containing multiple linkages, while UBR5 is likely branching multiple 'Lys-48'-linked chains of substrates initially modified (PubMed:29033132). Together with KCMF1, part of a protein quality control pathway that catalyzes ubiquitination and degradation of proteins that have been oxidized in response to reactive oxygen species (ROS): recognizes proteins with an Arg-CysO3(H) degron at the N-terminus, and mediates assembly of heterotypic 'Lys-63'-/'Lys-27'-linked branched ubiquitin chains on oxidized proteins, leading to their degradation by autophagy (PubMed:34893540). Catalytic component of the SIFI complex, a multiprotein complex required to inhibit the mitochondrial stress response after a specific stress event has been resolved: ubiquitinates and degrades (1) components of the HRI-mediated signaling of the integrated stress response, such as DELE1 and EIF2AK1/HRI, as well as (2) unimported mitochondrial precursors (PubMed:38297121). Within the SIFI complex, UBR4 initiates ubiquitin chain that are further elongated or branched by KCMF1 (PubMed:38297121). Mediates ubiquitination of ACLY, leading to its subsequent degradation (PubMed:23932781). Together with clathrin, forms meshwork structures involved in membrane morphogenesis and cytoskeletal organization (PubMed:16214886).</text>
</comment>
<comment type="catalytic activity">
    <reaction evidence="11 14 15 18 19 20">
        <text>S-ubiquitinyl-[E2 ubiquitin-conjugating enzyme]-L-cysteine + [acceptor protein]-L-lysine = [E2 ubiquitin-conjugating enzyme]-L-cysteine + N(6)-ubiquitinyl-[acceptor protein]-L-lysine.</text>
        <dbReference type="EC" id="2.3.2.27"/>
    </reaction>
</comment>
<comment type="pathway">
    <text evidence="11 13 14 15 18 19 20">Protein modification; protein ubiquitination.</text>
</comment>
<comment type="subunit">
    <text evidence="8 13 19 20 31">Component of the SIFI complex, composed of KCMF1, UBR4 and calmodulin (CALM1, CALM2 or CALM3) (Probable) (PubMed:16214886, PubMed:25582440, PubMed:38297121). Interacts with E2 conjugating enzymes UBE2A and UBE2B (PubMed:25582440, PubMed:38182926, PubMed:38297121). Interacts with RB1 (PubMed:16214886).</text>
</comment>
<comment type="subunit">
    <text evidence="7">(Microbial infection) Interacts with protein E7 from papilloma virus HPV-16, HPV-6B and HPV-11.</text>
</comment>
<comment type="subunit">
    <text evidence="16">(Microbial infection) Interacts with Rift valley fever virus glycoprotein N; this interaction is important for viral RNA production.</text>
</comment>
<comment type="interaction">
    <interactant intactId="EBI-1995940">
        <id>Q5T4S7</id>
    </interactant>
    <interactant intactId="EBI-5235340">
        <id>Q7Z699</id>
        <label>SPRED1</label>
    </interactant>
    <organismsDiffer>false</organismsDiffer>
    <experiments>3</experiments>
</comment>
<comment type="interaction">
    <interactant intactId="EBI-1995940">
        <id>Q5T4S7</id>
    </interactant>
    <interactant intactId="EBI-866453">
        <id>P03129</id>
        <label>E7</label>
    </interactant>
    <organismsDiffer>true</organismsDiffer>
    <experiments>5</experiments>
</comment>
<comment type="interaction">
    <interactant intactId="EBI-1995940">
        <id>Q5T4S7</id>
    </interactant>
    <interactant intactId="EBI-7005254">
        <id>P04020</id>
        <label>E7</label>
    </interactant>
    <organismsDiffer>true</organismsDiffer>
    <experiments>2</experiments>
</comment>
<comment type="interaction">
    <interactant intactId="EBI-1995940">
        <id>Q5T4S7</id>
    </interactant>
    <interactant intactId="EBI-6944797">
        <id>P06464</id>
        <label>E7</label>
    </interactant>
    <organismsDiffer>true</organismsDiffer>
    <experiments>2</experiments>
</comment>
<comment type="subcellular location">
    <subcellularLocation>
        <location evidence="8 14 20">Cytoplasm</location>
    </subcellularLocation>
    <subcellularLocation>
        <location evidence="8">Cytoplasm</location>
        <location evidence="8">Cytoskeleton</location>
    </subcellularLocation>
    <subcellularLocation>
        <location evidence="1">Nucleus</location>
    </subcellularLocation>
    <text evidence="1 8">Localizes to endosomes via its association with calcium-bound calmodulin (By similarity). Concentrates at the leading edge of membrane structures involved in actin motility (PubMed:16214886).</text>
</comment>
<comment type="alternative products">
    <event type="alternative splicing"/>
    <isoform>
        <id>Q5T4S7-1</id>
        <name>1</name>
        <sequence type="displayed"/>
    </isoform>
    <isoform>
        <id>Q5T4S7-2</id>
        <name>2</name>
        <sequence type="described" ref="VSP_025209"/>
    </isoform>
    <isoform>
        <id>Q5T4S7-3</id>
        <name>3</name>
        <sequence type="described" ref="VSP_025203 VSP_025206"/>
    </isoform>
    <isoform>
        <id>Q5T4S7-4</id>
        <name>4</name>
        <sequence type="described" ref="VSP_025205 VSP_025206"/>
    </isoform>
    <isoform>
        <id>Q5T4S7-5</id>
        <name>5</name>
        <sequence type="described" ref="VSP_025201 VSP_025202 VSP_025204"/>
    </isoform>
    <isoform>
        <id>Q5T4S7-6</id>
        <name>6</name>
        <sequence type="described" ref="VSP_025200 VSP_025207 VSP_025208"/>
    </isoform>
</comment>
<comment type="domain">
    <text evidence="18 19">The UBR-type zinc finger forms a pocket that mediates recognition of type 1 N-degrons (PubMed:38030679). It can also recognize type-2 N-degrons via two phenylalanines, Phe-1671 and Phe-1713, on its hydrophobic surface (PubMed:38030679). In addition to substrate-binding, the UBR-type zinc finger probably positions substrate proteins in the proximity of the bound and activated E2-ubiquitin conjugate to enable their ubiquitination (PubMed:38182926).</text>
</comment>
<comment type="domain">
    <text evidence="19">Constitutes an atypical E3 ubiquitin-protein ligase composed of a hemiRING-type zinc finger, a UBR-type zinc-finger interacting subdomain (UZI) and an N-terminal region that can serve as an affinity factor for the E2 conjugating enzymes UBE2A and UBE2B (PubMed:38182926). Compared to classical RING-type, the hemiRING-type only binds a single zinc ion: a hydrogen bonding network is present instead of a second zinc ion (PubMed:38182926). The hemiRING-type zinc finger maintains specificity for E2 conjugating enzymes UBE2A and UBE2B, which have high intrinsic lysine reactivity, obviating the need for the robust thioester activation of classical RING-type E3 ubiquitin-protein ligases (PubMed:38182926).</text>
</comment>
<comment type="disease" evidence="12">
    <disease id="DI-06856">
        <name>Episodic ataxia 8</name>
        <acronym>EA8</acronym>
        <description>A form of episodic ataxia, a neurologic disorder characterized by episodes of poor coordination and balance. EA8 affected individuals have attacks of unsteadiness, general weakness, and slurred speech. Additional variable features include twitching around the eyes, nystagmus, myokymia, and persistent intention tremor. Inheritance is autosomal dominant.</description>
        <dbReference type="MIM" id="616055"/>
    </disease>
    <text>The gene represented in this entry may be involved in disease pathogenesis.</text>
</comment>
<comment type="similarity">
    <text evidence="30">Belongs to the UBR4 family.</text>
</comment>
<comment type="sequence caution" evidence="30">
    <conflict type="erroneous initiation">
        <sequence resource="EMBL-CDS" id="CAD43719"/>
    </conflict>
</comment>
<organism>
    <name type="scientific">Homo sapiens</name>
    <name type="common">Human</name>
    <dbReference type="NCBI Taxonomy" id="9606"/>
    <lineage>
        <taxon>Eukaryota</taxon>
        <taxon>Metazoa</taxon>
        <taxon>Chordata</taxon>
        <taxon>Craniata</taxon>
        <taxon>Vertebrata</taxon>
        <taxon>Euteleostomi</taxon>
        <taxon>Mammalia</taxon>
        <taxon>Eutheria</taxon>
        <taxon>Euarchontoglires</taxon>
        <taxon>Primates</taxon>
        <taxon>Haplorrhini</taxon>
        <taxon>Catarrhini</taxon>
        <taxon>Hominidae</taxon>
        <taxon>Homo</taxon>
    </lineage>
</organism>
<protein>
    <recommendedName>
        <fullName evidence="30">E3 ubiquitin-protein ligase UBR4</fullName>
        <ecNumber evidence="11 14 15 20">2.3.2.27</ecNumber>
    </recommendedName>
    <alternativeName>
        <fullName evidence="27">600 kDa retinoblastoma protein-associated factor</fullName>
        <shortName evidence="27">p600</shortName>
    </alternativeName>
    <alternativeName>
        <fullName>N-recognin-4</fullName>
    </alternativeName>
    <alternativeName>
        <fullName evidence="26">Retinoblastoma-associated factor of 600 kDa</fullName>
        <shortName evidence="26">RBAF600</shortName>
    </alternativeName>
</protein>
<feature type="chain" id="PRO_0000286861" description="E3 ubiquitin-protein ligase UBR4">
    <location>
        <begin position="1"/>
        <end position="5183"/>
    </location>
</feature>
<feature type="domain" description="UZI" evidence="4 19 33 34">
    <location>
        <begin position="4952"/>
        <end position="5182"/>
    </location>
</feature>
<feature type="zinc finger region" description="UBR-type" evidence="3">
    <location>
        <begin position="1656"/>
        <end position="1729"/>
    </location>
</feature>
<feature type="zinc finger region" description="HemiRING-type" evidence="4 19 33 34">
    <location>
        <begin position="4835"/>
        <end position="4949"/>
    </location>
</feature>
<feature type="region of interest" description="Disordered" evidence="5">
    <location>
        <begin position="1"/>
        <end position="26"/>
    </location>
</feature>
<feature type="region of interest" description="Disordered" evidence="5">
    <location>
        <begin position="549"/>
        <end position="588"/>
    </location>
</feature>
<feature type="region of interest" description="Disordered" evidence="5">
    <location>
        <begin position="601"/>
        <end position="638"/>
    </location>
</feature>
<feature type="region of interest" description="Disordered" evidence="5">
    <location>
        <begin position="1756"/>
        <end position="1778"/>
    </location>
</feature>
<feature type="region of interest" description="Disordered" evidence="5">
    <location>
        <begin position="2430"/>
        <end position="2469"/>
    </location>
</feature>
<feature type="region of interest" description="Disordered" evidence="5">
    <location>
        <begin position="2711"/>
        <end position="2764"/>
    </location>
</feature>
<feature type="region of interest" description="Disordered" evidence="5">
    <location>
        <begin position="2833"/>
        <end position="2967"/>
    </location>
</feature>
<feature type="region of interest" description="Disordered" evidence="5">
    <location>
        <begin position="3342"/>
        <end position="3385"/>
    </location>
</feature>
<feature type="region of interest" description="UBR4 E3 catalytic module" evidence="4">
    <location>
        <begin position="4717"/>
        <end position="5182"/>
    </location>
</feature>
<feature type="compositionally biased region" description="Low complexity" evidence="5">
    <location>
        <begin position="555"/>
        <end position="566"/>
    </location>
</feature>
<feature type="compositionally biased region" description="Acidic residues" evidence="5">
    <location>
        <begin position="570"/>
        <end position="588"/>
    </location>
</feature>
<feature type="compositionally biased region" description="Pro residues" evidence="5">
    <location>
        <begin position="607"/>
        <end position="618"/>
    </location>
</feature>
<feature type="compositionally biased region" description="Polar residues" evidence="5">
    <location>
        <begin position="2443"/>
        <end position="2469"/>
    </location>
</feature>
<feature type="compositionally biased region" description="Polar residues" evidence="5">
    <location>
        <begin position="2716"/>
        <end position="2725"/>
    </location>
</feature>
<feature type="compositionally biased region" description="Acidic residues" evidence="5">
    <location>
        <begin position="2729"/>
        <end position="2738"/>
    </location>
</feature>
<feature type="compositionally biased region" description="Basic and acidic residues" evidence="5">
    <location>
        <begin position="2752"/>
        <end position="2764"/>
    </location>
</feature>
<feature type="compositionally biased region" description="Low complexity" evidence="5">
    <location>
        <begin position="2833"/>
        <end position="2855"/>
    </location>
</feature>
<feature type="compositionally biased region" description="Polar residues" evidence="5">
    <location>
        <begin position="2874"/>
        <end position="2884"/>
    </location>
</feature>
<feature type="compositionally biased region" description="Low complexity" evidence="5">
    <location>
        <begin position="2898"/>
        <end position="2908"/>
    </location>
</feature>
<feature type="compositionally biased region" description="Low complexity" evidence="5">
    <location>
        <begin position="2931"/>
        <end position="2945"/>
    </location>
</feature>
<feature type="compositionally biased region" description="Acidic residues" evidence="5">
    <location>
        <begin position="2950"/>
        <end position="2961"/>
    </location>
</feature>
<feature type="compositionally biased region" description="Low complexity" evidence="5">
    <location>
        <begin position="3342"/>
        <end position="3365"/>
    </location>
</feature>
<feature type="compositionally biased region" description="Basic and acidic residues" evidence="5">
    <location>
        <begin position="3371"/>
        <end position="3382"/>
    </location>
</feature>
<feature type="binding site" evidence="35 36">
    <location>
        <position position="1662"/>
    </location>
    <ligand>
        <name>Zn(2+)</name>
        <dbReference type="ChEBI" id="CHEBI:29105"/>
        <label>1</label>
    </ligand>
</feature>
<feature type="binding site" evidence="35 36">
    <location>
        <position position="1679"/>
    </location>
    <ligand>
        <name>Zn(2+)</name>
        <dbReference type="ChEBI" id="CHEBI:29105"/>
        <label>2</label>
    </ligand>
</feature>
<feature type="binding site" evidence="35 36">
    <location>
        <position position="1682"/>
    </location>
    <ligand>
        <name>Zn(2+)</name>
        <dbReference type="ChEBI" id="CHEBI:29105"/>
        <label>2</label>
    </ligand>
</feature>
<feature type="binding site" evidence="35 36">
    <location>
        <position position="1691"/>
    </location>
    <ligand>
        <name>Zn(2+)</name>
        <dbReference type="ChEBI" id="CHEBI:29105"/>
        <label>1</label>
    </ligand>
</feature>
<feature type="binding site" evidence="35 36">
    <location>
        <position position="1694"/>
    </location>
    <ligand>
        <name>Zn(2+)</name>
        <dbReference type="ChEBI" id="CHEBI:29105"/>
        <label>1</label>
    </ligand>
</feature>
<feature type="binding site" evidence="35 36">
    <location>
        <position position="1694"/>
    </location>
    <ligand>
        <name>Zn(2+)</name>
        <dbReference type="ChEBI" id="CHEBI:29105"/>
        <label>3</label>
    </ligand>
</feature>
<feature type="binding site" evidence="35 36">
    <location>
        <position position="1698"/>
    </location>
    <ligand>
        <name>Zn(2+)</name>
        <dbReference type="ChEBI" id="CHEBI:29105"/>
        <label>3</label>
    </ligand>
</feature>
<feature type="binding site" evidence="35 36">
    <location>
        <position position="1699"/>
    </location>
    <ligand>
        <name>Zn(2+)</name>
        <dbReference type="ChEBI" id="CHEBI:29105"/>
        <label>2</label>
    </ligand>
</feature>
<feature type="binding site" evidence="35 36">
    <location>
        <position position="1702"/>
    </location>
    <ligand>
        <name>Zn(2+)</name>
        <dbReference type="ChEBI" id="CHEBI:29105"/>
        <label>2</label>
    </ligand>
</feature>
<feature type="binding site" evidence="35 36">
    <location>
        <position position="1714"/>
    </location>
    <ligand>
        <name>Zn(2+)</name>
        <dbReference type="ChEBI" id="CHEBI:29105"/>
        <label>1</label>
    </ligand>
</feature>
<feature type="binding site" evidence="35 36">
    <location>
        <position position="1716"/>
    </location>
    <ligand>
        <name>Zn(2+)</name>
        <dbReference type="ChEBI" id="CHEBI:29105"/>
        <label>3</label>
    </ligand>
</feature>
<feature type="binding site" evidence="35 36">
    <location>
        <position position="1724"/>
    </location>
    <ligand>
        <name>Zn(2+)</name>
        <dbReference type="ChEBI" id="CHEBI:29105"/>
        <label>3</label>
    </ligand>
</feature>
<feature type="binding site" evidence="4 19 33 34">
    <location>
        <position position="4838"/>
    </location>
    <ligand>
        <name>Zn(2+)</name>
        <dbReference type="ChEBI" id="CHEBI:29105"/>
        <label>4</label>
    </ligand>
</feature>
<feature type="binding site" evidence="4 19 33 34">
    <location>
        <position position="4841"/>
    </location>
    <ligand>
        <name>Zn(2+)</name>
        <dbReference type="ChEBI" id="CHEBI:29105"/>
        <label>4</label>
    </ligand>
</feature>
<feature type="binding site" evidence="4 19 33 34">
    <location>
        <position position="4887"/>
    </location>
    <ligand>
        <name>Zn(2+)</name>
        <dbReference type="ChEBI" id="CHEBI:29105"/>
        <label>4</label>
    </ligand>
</feature>
<feature type="binding site" evidence="4 19 33 34">
    <location>
        <position position="4890"/>
    </location>
    <ligand>
        <name>Zn(2+)</name>
        <dbReference type="ChEBI" id="CHEBI:29105"/>
        <label>4</label>
    </ligand>
</feature>
<feature type="modified residue" description="Phosphoserine" evidence="37 40 42">
    <location>
        <position position="178"/>
    </location>
</feature>
<feature type="modified residue" description="Phosphoserine" evidence="37 39 40 42">
    <location>
        <position position="181"/>
    </location>
</feature>
<feature type="modified residue" description="Phosphoserine" evidence="1">
    <location>
        <position position="212"/>
    </location>
</feature>
<feature type="modified residue" description="Phosphotyrosine" evidence="1">
    <location>
        <position position="370"/>
    </location>
</feature>
<feature type="modified residue" description="Phosphothreonine" evidence="42">
    <location>
        <position position="905"/>
    </location>
</feature>
<feature type="modified residue" description="N6-acetyllysine" evidence="38">
    <location>
        <position position="1084"/>
    </location>
</feature>
<feature type="modified residue" description="Phosphoserine" evidence="2">
    <location>
        <position position="1402"/>
    </location>
</feature>
<feature type="modified residue" description="Phosphoserine" evidence="43">
    <location>
        <position position="1647"/>
    </location>
</feature>
<feature type="modified residue" description="Phosphoserine" evidence="43">
    <location>
        <position position="1652"/>
    </location>
</feature>
<feature type="modified residue" description="Phosphoserine" evidence="42">
    <location>
        <position position="1747"/>
    </location>
</feature>
<feature type="modified residue" description="Phosphoserine" evidence="2">
    <location>
        <position position="1754"/>
    </location>
</feature>
<feature type="modified residue" description="Phosphoserine" evidence="40">
    <location>
        <position position="1763"/>
    </location>
</feature>
<feature type="modified residue" description="Phosphoserine" evidence="42">
    <location>
        <position position="1878"/>
    </location>
</feature>
<feature type="modified residue" description="Phosphoserine" evidence="42">
    <location>
        <position position="1904"/>
    </location>
</feature>
<feature type="modified residue" description="Phosphothreonine" evidence="37 42">
    <location>
        <position position="2715"/>
    </location>
</feature>
<feature type="modified residue" description="Phosphoserine" evidence="22 41 42">
    <location>
        <position position="2719"/>
    </location>
</feature>
<feature type="modified residue" description="Phosphoserine" evidence="1">
    <location>
        <position position="2722"/>
    </location>
</feature>
<feature type="modified residue" description="Phosphothreonine" evidence="1">
    <location>
        <position position="2724"/>
    </location>
</feature>
<feature type="modified residue" description="Phosphothreonine" evidence="43">
    <location>
        <position position="2944"/>
    </location>
</feature>
<feature type="modified residue" description="Phosphoserine" evidence="43">
    <location>
        <position position="2952"/>
    </location>
</feature>
<feature type="splice variant" id="VSP_025200" description="In isoform 6." evidence="24">
    <location>
        <begin position="1"/>
        <end position="3585"/>
    </location>
</feature>
<feature type="splice variant" id="VSP_025201" description="In isoform 5." evidence="23">
    <original>K</original>
    <variation>KQ</variation>
    <location>
        <position position="2100"/>
    </location>
</feature>
<feature type="splice variant" id="VSP_025202" description="In isoform 5." evidence="23">
    <original>IGASVDPAGVTMIDAVKIYGKTKEQFGWPDEPPEEFPSASVSNICPSNLNQSNGTGDSDSAAPTTTSGTVLERLVVSSLEAL</original>
    <variation>SESPTPGADSVLIVTAKLGATGLWLSNILGSLHSADFSVLSSGNFELHLMY</variation>
    <location>
        <begin position="2405"/>
        <end position="2486"/>
    </location>
</feature>
<feature type="splice variant" id="VSP_025203" description="In isoform 3." evidence="30">
    <original>E</original>
    <variation>ESSETESLTKLD</variation>
    <location>
        <position position="2476"/>
    </location>
</feature>
<feature type="splice variant" id="VSP_025204" description="In isoform 5." evidence="23">
    <location>
        <begin position="2487"/>
        <end position="5183"/>
    </location>
</feature>
<feature type="splice variant" id="VSP_025205" description="In isoform 4." evidence="30">
    <original>T</original>
    <variation>TDCFFPRCACWSLGIVGILIGAPLETPSP</variation>
    <location>
        <position position="2601"/>
    </location>
</feature>
<feature type="splice variant" id="VSP_025206" description="In isoform 3 and isoform 4." evidence="30">
    <location>
        <begin position="2830"/>
        <end position="2864"/>
    </location>
</feature>
<feature type="splice variant" id="VSP_025207" description="In isoform 6." evidence="24">
    <original>DDSGTAGGISSTSASVNRYIL</original>
    <variation>VVPRCKGHLDKGLGLDQKTAS</variation>
    <location>
        <begin position="3777"/>
        <end position="3797"/>
    </location>
</feature>
<feature type="splice variant" id="VSP_025208" description="In isoform 6." evidence="24">
    <location>
        <begin position="3798"/>
        <end position="5183"/>
    </location>
</feature>
<feature type="splice variant" id="VSP_025209" description="In isoform 2." evidence="25">
    <original>K</original>
    <variation>KKQTTPTVGGIDTGSLEPCVCE</variation>
    <location>
        <position position="5108"/>
    </location>
</feature>
<feature type="sequence variant" id="VAR_032193" description="In dbSNP:rs16862578.">
    <original>T</original>
    <variation>A</variation>
    <location>
        <position position="1107"/>
    </location>
</feature>
<feature type="sequence variant" id="VAR_035540" description="In a breast cancer sample; somatic mutation; dbSNP:rs756549939." evidence="10">
    <original>R</original>
    <variation>H</variation>
    <location>
        <position position="1394"/>
    </location>
</feature>
<feature type="sequence variant" id="VAR_032194" description="In dbSNP:rs12584." evidence="6 9 21">
    <original>M</original>
    <variation>L</variation>
    <location>
        <position position="4867"/>
    </location>
</feature>
<feature type="sequence variant" id="VAR_032195" description="In a melanoma patient." evidence="9">
    <original>G</original>
    <variation>R</variation>
    <location>
        <position position="4924"/>
    </location>
</feature>
<feature type="sequence variant" id="VAR_032196" description="In dbSNP:rs2274010.">
    <original>V</original>
    <variation>M</variation>
    <location>
        <position position="5084"/>
    </location>
</feature>
<feature type="sequence variant" id="VAR_089250" description="In EA8; uncertain significance; dbSNP:rs587777845." evidence="12">
    <original>R</original>
    <variation>H</variation>
    <location>
        <position position="5091"/>
    </location>
</feature>
<feature type="mutagenesis site" description="Does not affect ability to recognize type-2 N-degrons." evidence="18">
    <original>E</original>
    <variation>A</variation>
    <location>
        <position position="1670"/>
    </location>
</feature>
<feature type="mutagenesis site" description="Does not recognize type-2 N-degrons." evidence="18">
    <original>F</original>
    <variation>A</variation>
    <variation>I</variation>
    <location>
        <position position="1671"/>
    </location>
</feature>
<feature type="mutagenesis site" description="Reduced but not abolished ability to recognize type-2 N-degrons." evidence="18">
    <original>F</original>
    <variation>A</variation>
    <location>
        <position position="1712"/>
    </location>
</feature>
<feature type="mutagenesis site" description="Does not recognize type-2 N-degrons." evidence="18">
    <original>F</original>
    <variation>A</variation>
    <variation>I</variation>
    <location>
        <position position="1713"/>
    </location>
</feature>
<feature type="mutagenesis site" description="Abolished E3 ubiquitin-protein ligase activity." evidence="19">
    <original>C</original>
    <variation>A</variation>
    <location>
        <position position="4841"/>
    </location>
</feature>
<feature type="mutagenesis site" description="Abolished E3 ubiquitin-protein ligase activity." evidence="19">
    <original>E</original>
    <variation>E</variation>
    <location>
        <position position="4843"/>
    </location>
</feature>
<feature type="mutagenesis site" description="Abolished E3 ubiquitin-protein ligase activity." evidence="19">
    <original>C</original>
    <variation>A</variation>
    <location>
        <position position="4890"/>
    </location>
</feature>
<feature type="sequence conflict" description="In Ref. 1; AAL83880." evidence="30" ref="1">
    <original>A</original>
    <variation>S</variation>
    <location>
        <position position="2016"/>
    </location>
</feature>
<feature type="sequence conflict" description="In Ref. 1; AAL83880." evidence="30" ref="1">
    <original>D</original>
    <variation>E</variation>
    <location>
        <position position="2410"/>
    </location>
</feature>
<feature type="sequence conflict" description="In Ref. 1; AAL83880." evidence="30" ref="1">
    <original>G</original>
    <variation>S</variation>
    <location>
        <position position="3957"/>
    </location>
</feature>
<feature type="sequence conflict" description="In Ref. 7; AAH18694." evidence="30" ref="7">
    <original>G</original>
    <variation>V</variation>
    <location>
        <position position="4589"/>
    </location>
</feature>
<feature type="helix" evidence="46">
    <location>
        <begin position="1664"/>
        <end position="1667"/>
    </location>
</feature>
<feature type="strand" evidence="46">
    <location>
        <begin position="1672"/>
        <end position="1679"/>
    </location>
</feature>
<feature type="turn" evidence="46">
    <location>
        <begin position="1680"/>
        <end position="1683"/>
    </location>
</feature>
<feature type="helix" evidence="46">
    <location>
        <begin position="1692"/>
        <end position="1696"/>
    </location>
</feature>
<feature type="turn" evidence="46">
    <location>
        <begin position="1697"/>
        <end position="1701"/>
    </location>
</feature>
<feature type="strand" evidence="46">
    <location>
        <begin position="1704"/>
        <end position="1712"/>
    </location>
</feature>
<feature type="turn" evidence="46">
    <location>
        <begin position="1715"/>
        <end position="1718"/>
    </location>
</feature>
<feature type="turn" evidence="44">
    <location>
        <begin position="4839"/>
        <end position="4841"/>
    </location>
</feature>
<feature type="turn" evidence="44">
    <location>
        <begin position="4845"/>
        <end position="4847"/>
    </location>
</feature>
<feature type="strand" evidence="44">
    <location>
        <begin position="4853"/>
        <end position="4864"/>
    </location>
</feature>
<feature type="strand" evidence="44">
    <location>
        <begin position="4869"/>
        <end position="4872"/>
    </location>
</feature>
<feature type="strand" evidence="44">
    <location>
        <begin position="4875"/>
        <end position="4887"/>
    </location>
</feature>
<feature type="helix" evidence="44">
    <location>
        <begin position="4888"/>
        <end position="4895"/>
    </location>
</feature>
<feature type="helix" evidence="44">
    <location>
        <begin position="4904"/>
        <end position="4907"/>
    </location>
</feature>
<feature type="turn" evidence="44">
    <location>
        <begin position="4908"/>
        <end position="4913"/>
    </location>
</feature>
<feature type="strand" evidence="44">
    <location>
        <begin position="4918"/>
        <end position="4921"/>
    </location>
</feature>
<feature type="helix" evidence="44">
    <location>
        <begin position="4929"/>
        <end position="4947"/>
    </location>
</feature>
<feature type="helix" evidence="44">
    <location>
        <begin position="4954"/>
        <end position="4969"/>
    </location>
</feature>
<feature type="turn" evidence="44">
    <location>
        <begin position="4976"/>
        <end position="4978"/>
    </location>
</feature>
<feature type="helix" evidence="44">
    <location>
        <begin position="4983"/>
        <end position="5003"/>
    </location>
</feature>
<feature type="helix" evidence="44">
    <location>
        <begin position="5007"/>
        <end position="5018"/>
    </location>
</feature>
<feature type="helix" evidence="44">
    <location>
        <begin position="5022"/>
        <end position="5024"/>
    </location>
</feature>
<feature type="helix" evidence="44">
    <location>
        <begin position="5025"/>
        <end position="5028"/>
    </location>
</feature>
<feature type="strand" evidence="44">
    <location>
        <begin position="5031"/>
        <end position="5034"/>
    </location>
</feature>
<feature type="helix" evidence="44">
    <location>
        <begin position="5035"/>
        <end position="5045"/>
    </location>
</feature>
<feature type="helix" evidence="44">
    <location>
        <begin position="5048"/>
        <end position="5071"/>
    </location>
</feature>
<feature type="helix" evidence="44">
    <location>
        <begin position="5087"/>
        <end position="5089"/>
    </location>
</feature>
<feature type="helix" evidence="44">
    <location>
        <begin position="5091"/>
        <end position="5106"/>
    </location>
</feature>
<feature type="turn" evidence="44">
    <location>
        <begin position="5107"/>
        <end position="5109"/>
    </location>
</feature>
<feature type="strand" evidence="45">
    <location>
        <begin position="5115"/>
        <end position="5118"/>
    </location>
</feature>
<feature type="helix" evidence="44">
    <location>
        <begin position="5119"/>
        <end position="5129"/>
    </location>
</feature>
<feature type="helix" evidence="44">
    <location>
        <begin position="5131"/>
        <end position="5147"/>
    </location>
</feature>
<feature type="turn" evidence="44">
    <location>
        <begin position="5148"/>
        <end position="5151"/>
    </location>
</feature>
<feature type="helix" evidence="44">
    <location>
        <begin position="5155"/>
        <end position="5161"/>
    </location>
</feature>
<feature type="turn" evidence="44">
    <location>
        <begin position="5165"/>
        <end position="5167"/>
    </location>
</feature>
<feature type="helix" evidence="44">
    <location>
        <begin position="5171"/>
        <end position="5180"/>
    </location>
</feature>
<sequence>MATSGGEEAAAAAPAPGTPATGADTTPGWEVAVRPLLSASYSAFEMKELPQLVASVIESESEILHHEKQYEPFYSSFVALSTHYITTVCSLIPRNQLQSVAAACKVLIEFSLLRLENPDEACAVSQKHLILLIKGLCTGCSRLDRTEIITFTAMMKSAKLPQTVKTLSDVEDQKELASPVSPELRQKEVQMNFLNQLTSVFNPRTVASQPISTQTLVEGENDEQSSTDQASAIKTKNVFIAQNVASLQELGGSEKLLRVCLNLPYFLRYINRFQDAVLANSFFIMPATVADATAVRNGFHSLVIDVTMALDTLSLPVLEPLNPSRLQDVTVLSLSCLYAGVSVATCMAILHVGSAQQVRTGSTSSKEDDYESDAATIVQKCLEIYDMIGQAISSSRRAGGEHYQNFQLLGAWCLLNSLFLILNLSPTALADKGKEKDPLAALRVRDILSRTKEGVGSPKLGPGKGHQGFGVLSVILANHAIKLLTSLFQDLQVEALHKGWETDGPPAALSIMAQSTSIQRIQRLIDSVPLMNLLLTLLSTSYRKACVLQRQRKGSMSSDASASTDSNTYYEDDFSSTEEDSSQDDDSEPILGQWFEETISPSKEKAAPPPPPPPPPLESSPRVKSPSKQAPGEKGNILASRKDPELFLGLASNILNFITSSMLNSRNNFIRNYLSVSLSEHHMATLASIIKEVDKDGLKGSSDEEFAAALYHFNHSLVTSDLQSPNLQNTLLQQLGVAPFSEGPWPLYIHPQSLSVLSRLLLIWQHKASAQGDPDVPECLKVWDRFLSTMKQNALQGVVPSETEDLNVEHLQMLLLIFHNFTETGRRAILSLFVQIIQELSVNMDAQMRFVPLILARLLLIFDYLLHQYSKAPVYLFEQVQHNLLSPPFGWASGSQDSNSRRATTPLYHGFKEVEENWSKHFSSDAVPHPRFYCVLSPEASEDDLNRLDSVACDVLFSKLVKYDELYAALTALLAAGSQLDTVRRKENKNVTALEACALQYYFLILWRILGILPPSKTYINQLSMNSPEMSECDILHTLRWSSRLRISSYVNWIKDHLIKQGMKAEHASSLLELASTTKCSSVKYDVEIVEEYFARQISSFCSIDCTTILQLHEIPSLQSIYTLDAAISKVQVSLDEHFSKMAAETDPHKSSEITKNLLPATLQLIDTYASFTRAYLLQNFNEEGTTEKPSKEKLQGFAAVLAIGSSRCKANTLGPTLVQNLPSSVQTVCESWNNINTNEFPNIGSWRNAFANDTIPSESYISAVQAAHLGTLCSQSLPLAASLKHTLLSLVRLTGDLIVWSDEMNPPQVIRTLLPLLLESSTESVAEISSNSLERILGPAESDEFLARVYEKLITGCYNILANHADPNSGLDESILEECLQYLEKQLESSQARKAMEEFFSDSGELVQIMMATANENLSAKFCNRVLKFFTKLFQLTEKSPNPSLLHLCGSLAQLACVEPVRLQAWLTRMTTSPPKDSDQLDVIQENRQLLQLLTTYIVRENSQVGEGVCAVLLGTLTPMATEMLANGDGTGFPELMVVMATLASAGQGAGHLQLHNAAVDWLSRCKKYLSQKNVVEKLNANVMHGKHVMILECTCHIMSYLADVTNALSQSNGQGPSHLSVDGEERAIEVDSDWVEELAVEEEDSQAEDSDEDSLCNKLCTFTITQKEFMNQHWYHCHTCKMVDGVGVCTVCAKVCHKDHEISYAKYGSFFCDCGAKEDGSCLALVKRTPSSGMSSTMKESAFQSEPRISESLVRHASTSSPADKAKVTISDGKVADEEKPKKSSLCRTVEGCREELQNQANFSFAPLVLDMLNFLMDAIQTNFQQASAVGSSSRAQQALSELHTVEKAVEMTDQLMVPTLGSQEGAFENVRMNYSGDQGQTIRQLISAHVLRRVAMCVLSSPHGRRQHLAVSHEKGKITVLQLSALLKQADSSKRKLTLTRLASAPVPFTVLSLTGNPCKEDYLAVCGLKDCHVLTFSSSGSVSDHLVLHPQLATGNFIIKAVWLPGSQTELAIVTADFVKIYDLCVDALSPTFYFLLPSSKIRDVTFLFNEEGKNIIVIMSSAGYIYTQLMEEASSAQQGPFYVTNVLEINHEDLKDSNSQVAGGGVSVYYSHVLQMLFFSYCQGKSFAATISRTTLEVLQLFPINIKSSNGGSKTSPALCQWSEVMNHPGLVCCVQQTTGVPLVVMVKPDTFLIQEIKTLPAKAKIQDMVAIRHTACNEQQRTTMILLCEDGSLRIYMANVENTSYWLQPSLQPSSVISIMKPVRKRKTATITTRTSSQVTFPIDFFEHNQQLTDVEFGGNDLLQVYNAQQIKHRLNSTGMYVANTKPGGFTIEISNNNSTMVMTGMRIQIGTQAIERAPSYIEIFGRTMQLNLSRSRWFDFPFTREEALQADKKLNLFIGASVDPAGVTMIDAVKIYGKTKEQFGWPDEPPEEFPSASVSNICPSNLNQSNGTGDSDSAAPTTTSGTVLERLVVSSLEALESCFAVGPIIEKERNKNAAQELATLLLSLPAPASVQQQSKSLLASLHTSRSAYHSHKDQALLSKAVQCLNTSSKEGKDLDPEVFQRLVITARSIAIMRPNNLVHFTESKLPQMETEGMDEGKEPQKQLEGDCCSFITQLVNHFWKLHASKPKNAFLAPACLPGLTHIEATVNALVDIIHGYCTCELDCINTASKIYMQMLLCPDPAVSFSCKQALIRVLRPRNKRRHVTLPSSPRSNTPMGDKDDDDDDDADEKMQSSGIPNGGHIRQESQEQSEVDHGDFEMVSESMVLETAENVNNGNPSPLEALLAGAEGFPPMLDIPPDADDETMVELAIALSLQQDQQGSSSSALGLQSLGLSGQAPSSSSLDAGTLSDTTASAPASDDEGSTAATDGSTLRTSPADHGGSVGSESGGSAVDSVAGEHSVSGRSSAYGDATAEGHPAGPGSVSSSTGAISTTTGHQEGDGSEGEGEGETEGDVHTSNRLHMVRLMLLERLLQTLPQLRNVGGVRAIPYMQVILMLTTDLDGEDEKDKGALDNLLSQLIAELGMDKKDVSKKNERSALNEVHLVVMRLLSVFMSRTKSGSKSSICESSSLISSATAAALLSSGAVDYCLHVLKSLLEYWKSQQNDEEPVATSQLLKPHTTSSPPDMSPFFLRQYVKGHAADVFEAYTQLLTEMVLRLPYQIKKITDTNSRIPPPVFDHSWFYFLSEYLMIQQTPFVRRQVRKLLLFICGSKEKYRQLRDLHTLDSHVRGIKKLLEEQGIFLRASVVTASSGSALQYDTLISLMEHLKACAEIAAQRTINWQKFCIKDDSVLYFLLQVSFLVDEGVSPVLLQLLSCALCGSKVLAALAASSGSSSASSSSAPVAASSGQATTQSKSSTKKSKKEEKEKEKDGETSGSQEDQLCTALVNQLNKFADKETLIQFLRCFLLESNSSSVRWQAHCLTLHIYRNSSKSQQELLLDLMWSIWPELPAYGRKAAQFVDLLGYFSLKTPQTEKKLKEYSQKAVEILRTQNHILTNHPNSNIYNTLSGLVEFDGYYLESDPCLVCNNPEVPFCYIKLSSIKVDTRYTTTQQVVKLIGSHTISKVTVKIGDLKRTKMVRTINLYYNNRTVQAIVELKNKPARWHKAKKVQLTPGQTEVKIDLPLPIVASNLMIEFADFYENYQASTETLQCPRCSASVPANPGVCGNCGENVYQCHKCRSINYDEKDPFLCNACGFCKYARFDFMLYAKPCCAVDPIENEEDRKKAVSNINTLLDKADRVYHQLMGHRPQLENLLCKVNEAAPEKPQDDSGTAGGISSTSASVNRYILQLAQEYCGDCKNSFDELSKIIQKVFASRKELLEYDLQQREAATKSSRTSVQPTFTASQYRALSVLGCGHTSSTKCYGCASAVTEHCITLLRALATNPALRHILVSQGLIRELFDYNLRRGAAAMREEVRQLMCLLTRDNPEATQQMNDLIIGKVSTALKGHWANPDLASSLQYEMLLLTDSISKEDSCWELRLRCALSLFLMAVNIKTPVVVENITLMCLRILQKLIKPPAPTSKKNKDVPVEALTTVKPYCNEIHAQAQLWLKRDPKASYDAWKKCLPIRGIDGNGKAPSKSELRHLYLTEKYVWRWKQFLSRRGKRTSPLDLKLGHNNWLRQVLFTPATQAARQAACTIVEALATIPSRKQQVLDLLTSYLDELSIAGECAAEYLALYQKLITSAHWKVYLAARGVLPYVGNLITKEIARLLALEEATLSTDLQQGYALKSLTGLLSSFVEVESIKRHFKSRLVGTVLNGYLCLRKLVVQRTKLIDETQDMLLEMLEDMTTGTESETKAFMAVCIETAKRYNLDDYRTPVFIFERLCSIIYPEENEVTEFFVTLEKDPQQEDFLQGRMPGNPYSSNEPGIGPLMRDIKNKICQDCDLVALLEDDSGMELLVNNKIISLDLPVAEVYKKVWCTTNEGEPMRIVYRMRGLLGDATEEFIESLDSTTDEEEDEEEVYKMAGVMAQCGGLECMLNRLAGIRDFKQGRHLLTVLLKLFSYCVKVKVNRQQLVKLEMNTLNVMLGTLNLALVAEQESKDSGGAAVAEQVLSIMEIILDESNAEPLSEDKGNLLLTGDKDQLVMLLDQINSTFVRSNPSVLQGLLRIIPYLSFGEVEKMQILVERFKPYCNFDKYDEDHSGDDKVFLDCFCKIAAGIKNNSNGHQLKDLILQKGITQNALDYMKKHIPSAKNLDADIWKKFLSRPALPFILRLLRGLAIQHPGTQVLIGTDSIPNLHKLEQVSSDEGIGTLAENLLEALREHPDVNKKIDAARRETRAEKKRMAMAMRQKALGTLGMTTNEKGQVVTKTALLKQMEELIEEPGLTCCICREGYKFQPTKVLGIYTFTKRVALEEMENKPRKQQGYSTVSHFNIVHYDCHLAAVRLARGREEWESAALQNANTKCNGLLPVWGPHVPESAFATCLARHNTYLQECTGQREPTYQLNIHDIKLLFLRFAMEQSFSADTGGGGRESNIHLIPYIIHTVLYVLNTTRATSREEKNLQGFLEQPKEKWVESAFEVDGPYYFTVLALHILPPEQWRATRVEILRRLLVTSQARAVAPGGATRLTDKAVKDYSAYRSSLLFWALVDLIYNMFKKVPTSNTEGGWSCSLAEYIRHNDMPIYEAADKALKTFQEEFMPVETFSEFLDVAGLLSEITDPESFLKDLLNSVP</sequence>
<proteinExistence type="evidence at protein level"/>
<evidence type="ECO:0000250" key="1">
    <source>
        <dbReference type="UniProtKB" id="A2AN08"/>
    </source>
</evidence>
<evidence type="ECO:0000250" key="2">
    <source>
        <dbReference type="UniProtKB" id="Q2TL32"/>
    </source>
</evidence>
<evidence type="ECO:0000255" key="3">
    <source>
        <dbReference type="PROSITE-ProRule" id="PRU00508"/>
    </source>
</evidence>
<evidence type="ECO:0000255" key="4">
    <source>
        <dbReference type="PROSITE-ProRule" id="PRU01388"/>
    </source>
</evidence>
<evidence type="ECO:0000256" key="5">
    <source>
        <dbReference type="SAM" id="MobiDB-lite"/>
    </source>
</evidence>
<evidence type="ECO:0000269" key="6">
    <source>
    </source>
</evidence>
<evidence type="ECO:0000269" key="7">
    <source>
    </source>
</evidence>
<evidence type="ECO:0000269" key="8">
    <source>
    </source>
</evidence>
<evidence type="ECO:0000269" key="9">
    <source>
    </source>
</evidence>
<evidence type="ECO:0000269" key="10">
    <source>
    </source>
</evidence>
<evidence type="ECO:0000269" key="11">
    <source>
    </source>
</evidence>
<evidence type="ECO:0000269" key="12">
    <source>
    </source>
</evidence>
<evidence type="ECO:0000269" key="13">
    <source>
    </source>
</evidence>
<evidence type="ECO:0000269" key="14">
    <source>
    </source>
</evidence>
<evidence type="ECO:0000269" key="15">
    <source>
    </source>
</evidence>
<evidence type="ECO:0000269" key="16">
    <source>
    </source>
</evidence>
<evidence type="ECO:0000269" key="17">
    <source>
    </source>
</evidence>
<evidence type="ECO:0000269" key="18">
    <source>
    </source>
</evidence>
<evidence type="ECO:0000269" key="19">
    <source>
    </source>
</evidence>
<evidence type="ECO:0000269" key="20">
    <source>
    </source>
</evidence>
<evidence type="ECO:0000269" key="21">
    <source ref="10"/>
</evidence>
<evidence type="ECO:0000269" key="22">
    <source ref="4"/>
</evidence>
<evidence type="ECO:0000303" key="23">
    <source>
    </source>
</evidence>
<evidence type="ECO:0000303" key="24">
    <source>
    </source>
</evidence>
<evidence type="ECO:0000303" key="25">
    <source>
    </source>
</evidence>
<evidence type="ECO:0000303" key="26">
    <source>
    </source>
</evidence>
<evidence type="ECO:0000303" key="27">
    <source>
    </source>
</evidence>
<evidence type="ECO:0000303" key="28">
    <source>
    </source>
</evidence>
<evidence type="ECO:0000303" key="29">
    <source>
    </source>
</evidence>
<evidence type="ECO:0000305" key="30"/>
<evidence type="ECO:0000305" key="31">
    <source>
    </source>
</evidence>
<evidence type="ECO:0000312" key="32">
    <source>
        <dbReference type="HGNC" id="HGNC:30313"/>
    </source>
</evidence>
<evidence type="ECO:0007744" key="33">
    <source>
        <dbReference type="PDB" id="8B5W"/>
    </source>
</evidence>
<evidence type="ECO:0007744" key="34">
    <source>
        <dbReference type="PDB" id="8BTL"/>
    </source>
</evidence>
<evidence type="ECO:0007744" key="35">
    <source>
        <dbReference type="PDB" id="8J9Q"/>
    </source>
</evidence>
<evidence type="ECO:0007744" key="36">
    <source>
        <dbReference type="PDB" id="8J9R"/>
    </source>
</evidence>
<evidence type="ECO:0007744" key="37">
    <source>
    </source>
</evidence>
<evidence type="ECO:0007744" key="38">
    <source>
    </source>
</evidence>
<evidence type="ECO:0007744" key="39">
    <source>
    </source>
</evidence>
<evidence type="ECO:0007744" key="40">
    <source>
    </source>
</evidence>
<evidence type="ECO:0007744" key="41">
    <source>
    </source>
</evidence>
<evidence type="ECO:0007744" key="42">
    <source>
    </source>
</evidence>
<evidence type="ECO:0007744" key="43">
    <source>
    </source>
</evidence>
<evidence type="ECO:0007829" key="44">
    <source>
        <dbReference type="PDB" id="8B5W"/>
    </source>
</evidence>
<evidence type="ECO:0007829" key="45">
    <source>
        <dbReference type="PDB" id="8BTL"/>
    </source>
</evidence>
<evidence type="ECO:0007829" key="46">
    <source>
        <dbReference type="PDB" id="8J9R"/>
    </source>
</evidence>
<accession>Q5T4S7</accession>
<accession>A8MPT2</accession>
<accession>A8MQ33</accession>
<accession>A8MQB1</accession>
<accession>O60646</accession>
<accession>O75050</accession>
<accession>Q4QRK5</accession>
<accession>Q5T4S8</accession>
<accession>Q5T4S9</accession>
<accession>Q5TBN8</accession>
<accession>Q5TBP2</accession>
<accession>Q6DKH8</accession>
<accession>Q6P4A4</accession>
<accession>Q7L8P7</accession>
<accession>Q8IXJ4</accession>
<accession>Q8TDN5</accession>
<accession>Q8WV67</accession>
<accession>Q9HA46</accession>
<accession>Q9P2N9</accession>
<accession>Q9UG82</accession>
<gene>
    <name evidence="28 32" type="primary">UBR4</name>
    <name evidence="29" type="synonym">KIAA0462</name>
    <name evidence="23" type="synonym">KIAA1307</name>
    <name evidence="26" type="synonym">RBAF600</name>
</gene>